<feature type="initiator methionine" description="Removed" evidence="5 13 15">
    <location>
        <position position="1"/>
    </location>
</feature>
<feature type="chain" id="PRO_0000134165" description="Small ribosomal subunit protein uS2">
    <location>
        <begin position="2"/>
        <end position="241"/>
    </location>
</feature>
<feature type="modified residue" description="N6-succinyllysine" evidence="7">
    <location>
        <position position="115"/>
    </location>
</feature>
<feature type="helix" evidence="32">
    <location>
        <begin position="7"/>
        <end position="12"/>
    </location>
</feature>
<feature type="strand" evidence="32">
    <location>
        <begin position="15"/>
        <end position="19"/>
    </location>
</feature>
<feature type="helix" evidence="32">
    <location>
        <begin position="20"/>
        <end position="22"/>
    </location>
</feature>
<feature type="helix" evidence="32">
    <location>
        <begin position="25"/>
        <end position="27"/>
    </location>
</feature>
<feature type="strand" evidence="25">
    <location>
        <begin position="28"/>
        <end position="30"/>
    </location>
</feature>
<feature type="helix" evidence="26">
    <location>
        <begin position="34"/>
        <end position="37"/>
    </location>
</feature>
<feature type="strand" evidence="26">
    <location>
        <begin position="38"/>
        <end position="40"/>
    </location>
</feature>
<feature type="helix" evidence="32">
    <location>
        <begin position="43"/>
        <end position="61"/>
    </location>
</feature>
<feature type="turn" evidence="32">
    <location>
        <begin position="62"/>
        <end position="64"/>
    </location>
</feature>
<feature type="strand" evidence="29">
    <location>
        <begin position="67"/>
        <end position="70"/>
    </location>
</feature>
<feature type="turn" evidence="31">
    <location>
        <begin position="74"/>
        <end position="76"/>
    </location>
</feature>
<feature type="helix" evidence="31">
    <location>
        <begin position="77"/>
        <end position="80"/>
    </location>
</feature>
<feature type="helix" evidence="32">
    <location>
        <begin position="83"/>
        <end position="87"/>
    </location>
</feature>
<feature type="strand" evidence="29">
    <location>
        <begin position="90"/>
        <end position="92"/>
    </location>
</feature>
<feature type="turn" evidence="32">
    <location>
        <begin position="98"/>
        <end position="103"/>
    </location>
</feature>
<feature type="helix" evidence="32">
    <location>
        <begin position="104"/>
        <end position="114"/>
    </location>
</feature>
<feature type="helix" evidence="30">
    <location>
        <begin position="125"/>
        <end position="127"/>
    </location>
</feature>
<feature type="turn" evidence="30">
    <location>
        <begin position="132"/>
        <end position="134"/>
    </location>
</feature>
<feature type="helix" evidence="32">
    <location>
        <begin position="143"/>
        <end position="148"/>
    </location>
</feature>
<feature type="helix" evidence="32">
    <location>
        <begin position="149"/>
        <end position="151"/>
    </location>
</feature>
<feature type="turn" evidence="30">
    <location>
        <begin position="152"/>
        <end position="154"/>
    </location>
</feature>
<feature type="strand" evidence="29">
    <location>
        <begin position="159"/>
        <end position="164"/>
    </location>
</feature>
<feature type="turn" evidence="32">
    <location>
        <begin position="166"/>
        <end position="169"/>
    </location>
</feature>
<feature type="helix" evidence="32">
    <location>
        <begin position="170"/>
        <end position="179"/>
    </location>
</feature>
<feature type="strand" evidence="32">
    <location>
        <begin position="184"/>
        <end position="187"/>
    </location>
</feature>
<feature type="strand" evidence="28">
    <location>
        <begin position="189"/>
        <end position="191"/>
    </location>
</feature>
<feature type="strand" evidence="28">
    <location>
        <begin position="193"/>
        <end position="195"/>
    </location>
</feature>
<feature type="strand" evidence="32">
    <location>
        <begin position="197"/>
        <end position="202"/>
    </location>
</feature>
<feature type="strand" evidence="30">
    <location>
        <begin position="204"/>
        <end position="206"/>
    </location>
</feature>
<feature type="helix" evidence="32">
    <location>
        <begin position="207"/>
        <end position="225"/>
    </location>
</feature>
<feature type="helix" evidence="27">
    <location>
        <begin position="228"/>
        <end position="232"/>
    </location>
</feature>
<gene>
    <name type="primary">rpsB</name>
    <name type="ordered locus">b0169</name>
    <name type="ordered locus">JW0164</name>
</gene>
<comment type="function">
    <text evidence="2">Required for ribosomal protein bS1 (rpsA) to bind to the 30S subunit.</text>
</comment>
<comment type="subunit">
    <text evidence="1 2 3 4 6 8 9 10 11 12 13 14 16">Part of the 30S ribosomal subunit, contacts bS1 (PubMed:12068815). Some nascent polypeptide chains are able to cross-link to this protein in situ (PubMed:9716382). In collided ribosomes contacts ribosome rescue factor SmrB (PubMed:35264790).</text>
</comment>
<comment type="interaction">
    <interactant intactId="EBI-543439">
        <id>P0A7V0</id>
    </interactant>
    <interactant intactId="EBI-543417">
        <id>P0A9Q7</id>
        <label>adhE</label>
    </interactant>
    <organismsDiffer>false</organismsDiffer>
    <experiments>2</experiments>
</comment>
<comment type="interaction">
    <interactant intactId="EBI-543439">
        <id>P0A7V0</id>
    </interactant>
    <interactant intactId="EBI-370256">
        <id>P0ACC7</id>
        <label>glmU</label>
    </interactant>
    <organismsDiffer>false</organismsDiffer>
    <experiments>2</experiments>
</comment>
<comment type="interaction">
    <interactant intactId="EBI-543439">
        <id>P0A7V0</id>
    </interactant>
    <interactant intactId="EBI-562824">
        <id>P0ACG8</id>
        <label>hslR</label>
    </interactant>
    <organismsDiffer>false</organismsDiffer>
    <experiments>3</experiments>
</comment>
<comment type="interaction">
    <interactant intactId="EBI-543439">
        <id>P0A7V0</id>
    </interactant>
    <interactant intactId="EBI-560148">
        <id>P0A8I8</id>
        <label>rlmH</label>
    </interactant>
    <organismsDiffer>false</organismsDiffer>
    <experiments>2</experiments>
</comment>
<comment type="mass spectrometry"/>
<comment type="similarity">
    <text evidence="18">Belongs to the universal ribosomal protein uS2 family.</text>
</comment>
<proteinExistence type="evidence at protein level"/>
<evidence type="ECO:0000269" key="1">
    <source>
    </source>
</evidence>
<evidence type="ECO:0000269" key="2">
    <source>
    </source>
</evidence>
<evidence type="ECO:0000269" key="3">
    <source>
    </source>
</evidence>
<evidence type="ECO:0000269" key="4">
    <source>
    </source>
</evidence>
<evidence type="ECO:0000269" key="5">
    <source>
    </source>
</evidence>
<evidence type="ECO:0000269" key="6">
    <source>
    </source>
</evidence>
<evidence type="ECO:0000269" key="7">
    <source>
    </source>
</evidence>
<evidence type="ECO:0000269" key="8">
    <source>
    </source>
</evidence>
<evidence type="ECO:0000269" key="9">
    <source>
    </source>
</evidence>
<evidence type="ECO:0000269" key="10">
    <source>
    </source>
</evidence>
<evidence type="ECO:0000269" key="11">
    <source>
    </source>
</evidence>
<evidence type="ECO:0000269" key="12">
    <source>
    </source>
</evidence>
<evidence type="ECO:0000269" key="13">
    <source>
    </source>
</evidence>
<evidence type="ECO:0000269" key="14">
    <source>
    </source>
</evidence>
<evidence type="ECO:0000269" key="15">
    <source>
    </source>
</evidence>
<evidence type="ECO:0000269" key="16">
    <source>
    </source>
</evidence>
<evidence type="ECO:0000303" key="17">
    <source>
    </source>
</evidence>
<evidence type="ECO:0000305" key="18"/>
<evidence type="ECO:0007744" key="19">
    <source>
        <dbReference type="PDB" id="5MDV"/>
    </source>
</evidence>
<evidence type="ECO:0007744" key="20">
    <source>
        <dbReference type="PDB" id="5MDW"/>
    </source>
</evidence>
<evidence type="ECO:0007744" key="21">
    <source>
        <dbReference type="PDB" id="5MDY"/>
    </source>
</evidence>
<evidence type="ECO:0007744" key="22">
    <source>
        <dbReference type="PDB" id="5MDZ"/>
    </source>
</evidence>
<evidence type="ECO:0007744" key="23">
    <source>
        <dbReference type="PDB" id="7QG8"/>
    </source>
</evidence>
<evidence type="ECO:0007744" key="24">
    <source>
        <dbReference type="PDB" id="7QGR"/>
    </source>
</evidence>
<evidence type="ECO:0007829" key="25">
    <source>
        <dbReference type="PDB" id="4ODM"/>
    </source>
</evidence>
<evidence type="ECO:0007829" key="26">
    <source>
        <dbReference type="PDB" id="4ODN"/>
    </source>
</evidence>
<evidence type="ECO:0007829" key="27">
    <source>
        <dbReference type="PDB" id="4TOI"/>
    </source>
</evidence>
<evidence type="ECO:0007829" key="28">
    <source>
        <dbReference type="PDB" id="7OE0"/>
    </source>
</evidence>
<evidence type="ECO:0007829" key="29">
    <source>
        <dbReference type="PDB" id="8CAI"/>
    </source>
</evidence>
<evidence type="ECO:0007829" key="30">
    <source>
        <dbReference type="PDB" id="8CAZ"/>
    </source>
</evidence>
<evidence type="ECO:0007829" key="31">
    <source>
        <dbReference type="PDB" id="8CF8"/>
    </source>
</evidence>
<evidence type="ECO:0007829" key="32">
    <source>
        <dbReference type="PDB" id="8CGJ"/>
    </source>
</evidence>
<protein>
    <recommendedName>
        <fullName evidence="17">Small ribosomal subunit protein uS2</fullName>
    </recommendedName>
    <alternativeName>
        <fullName>30S ribosomal protein S2</fullName>
    </alternativeName>
</protein>
<name>RS2_ECOLI</name>
<dbReference type="EMBL" id="V00343">
    <property type="protein sequence ID" value="CAA23631.1"/>
    <property type="molecule type" value="Genomic_DNA"/>
</dbReference>
<dbReference type="EMBL" id="U70214">
    <property type="protein sequence ID" value="AAB08598.1"/>
    <property type="molecule type" value="Genomic_DNA"/>
</dbReference>
<dbReference type="EMBL" id="U00096">
    <property type="protein sequence ID" value="AAC73280.1"/>
    <property type="molecule type" value="Genomic_DNA"/>
</dbReference>
<dbReference type="EMBL" id="AP009048">
    <property type="protein sequence ID" value="BAB96744.1"/>
    <property type="molecule type" value="Genomic_DNA"/>
</dbReference>
<dbReference type="PIR" id="A02696">
    <property type="entry name" value="R3EC2"/>
</dbReference>
<dbReference type="RefSeq" id="NP_414711.1">
    <property type="nucleotide sequence ID" value="NC_000913.3"/>
</dbReference>
<dbReference type="RefSeq" id="WP_000246882.1">
    <property type="nucleotide sequence ID" value="NZ_SSZK01000004.1"/>
</dbReference>
<dbReference type="PDB" id="2YKR">
    <property type="method" value="EM"/>
    <property type="resolution" value="9.80 A"/>
    <property type="chains" value="B=9-226"/>
</dbReference>
<dbReference type="PDB" id="3J9Y">
    <property type="method" value="EM"/>
    <property type="resolution" value="3.90 A"/>
    <property type="chains" value="b=1-240"/>
</dbReference>
<dbReference type="PDB" id="3J9Z">
    <property type="method" value="EM"/>
    <property type="resolution" value="3.60 A"/>
    <property type="chains" value="SB=2-241"/>
</dbReference>
<dbReference type="PDB" id="3JA1">
    <property type="method" value="EM"/>
    <property type="resolution" value="3.60 A"/>
    <property type="chains" value="SB=2-241"/>
</dbReference>
<dbReference type="PDB" id="3JBU">
    <property type="method" value="EM"/>
    <property type="resolution" value="3.64 A"/>
    <property type="chains" value="B=1-241"/>
</dbReference>
<dbReference type="PDB" id="3JBV">
    <property type="method" value="EM"/>
    <property type="resolution" value="3.32 A"/>
    <property type="chains" value="B=1-241"/>
</dbReference>
<dbReference type="PDB" id="3JCD">
    <property type="method" value="EM"/>
    <property type="resolution" value="3.70 A"/>
    <property type="chains" value="b=1-241"/>
</dbReference>
<dbReference type="PDB" id="3JCE">
    <property type="method" value="EM"/>
    <property type="resolution" value="3.20 A"/>
    <property type="chains" value="b=1-241"/>
</dbReference>
<dbReference type="PDB" id="3JCJ">
    <property type="method" value="EM"/>
    <property type="resolution" value="3.70 A"/>
    <property type="chains" value="j=1-241"/>
</dbReference>
<dbReference type="PDB" id="3JCN">
    <property type="method" value="EM"/>
    <property type="resolution" value="4.60 A"/>
    <property type="chains" value="d=1-241"/>
</dbReference>
<dbReference type="PDB" id="4A2I">
    <property type="method" value="EM"/>
    <property type="resolution" value="16.50 A"/>
    <property type="chains" value="B=9-226"/>
</dbReference>
<dbReference type="PDB" id="4ADV">
    <property type="method" value="EM"/>
    <property type="resolution" value="13.50 A"/>
    <property type="chains" value="B=2-241"/>
</dbReference>
<dbReference type="PDB" id="4ODL">
    <property type="method" value="X-ray"/>
    <property type="resolution" value="2.92 A"/>
    <property type="chains" value="C/D/E/F=20-34"/>
</dbReference>
<dbReference type="PDB" id="4ODM">
    <property type="method" value="X-ray"/>
    <property type="resolution" value="1.75 A"/>
    <property type="chains" value="E/F/G/H/I/J/K/L/M=20-34"/>
</dbReference>
<dbReference type="PDB" id="4ODN">
    <property type="method" value="X-ray"/>
    <property type="resolution" value="1.60 A"/>
    <property type="chains" value="B=26-41"/>
</dbReference>
<dbReference type="PDB" id="4ODP">
    <property type="method" value="X-ray"/>
    <property type="resolution" value="1.75 A"/>
    <property type="chains" value="B=20-34"/>
</dbReference>
<dbReference type="PDB" id="4TOI">
    <property type="method" value="X-ray"/>
    <property type="resolution" value="2.30 A"/>
    <property type="chains" value="A=1-236"/>
</dbReference>
<dbReference type="PDB" id="4U1U">
    <property type="method" value="X-ray"/>
    <property type="resolution" value="2.95 A"/>
    <property type="chains" value="AB/CB=9-226"/>
</dbReference>
<dbReference type="PDB" id="4U1V">
    <property type="method" value="X-ray"/>
    <property type="resolution" value="3.00 A"/>
    <property type="chains" value="AB/CB=9-226"/>
</dbReference>
<dbReference type="PDB" id="4U20">
    <property type="method" value="X-ray"/>
    <property type="resolution" value="2.90 A"/>
    <property type="chains" value="AB/CB=9-226"/>
</dbReference>
<dbReference type="PDB" id="4U24">
    <property type="method" value="X-ray"/>
    <property type="resolution" value="2.90 A"/>
    <property type="chains" value="AB/CB=9-226"/>
</dbReference>
<dbReference type="PDB" id="4U25">
    <property type="method" value="X-ray"/>
    <property type="resolution" value="2.90 A"/>
    <property type="chains" value="AB/CB=9-226"/>
</dbReference>
<dbReference type="PDB" id="4U26">
    <property type="method" value="X-ray"/>
    <property type="resolution" value="2.80 A"/>
    <property type="chains" value="AB/CB=9-226"/>
</dbReference>
<dbReference type="PDB" id="4U27">
    <property type="method" value="X-ray"/>
    <property type="resolution" value="2.80 A"/>
    <property type="chains" value="AB/CB=9-226"/>
</dbReference>
<dbReference type="PDB" id="4V48">
    <property type="method" value="EM"/>
    <property type="resolution" value="11.50 A"/>
    <property type="chains" value="BB=2-241"/>
</dbReference>
<dbReference type="PDB" id="4V4H">
    <property type="method" value="X-ray"/>
    <property type="resolution" value="3.46 A"/>
    <property type="chains" value="AB/CB=1-241"/>
</dbReference>
<dbReference type="PDB" id="4V4Q">
    <property type="method" value="X-ray"/>
    <property type="resolution" value="3.46 A"/>
    <property type="chains" value="AB/CB=2-241"/>
</dbReference>
<dbReference type="PDB" id="4V4V">
    <property type="method" value="EM"/>
    <property type="resolution" value="15.00 A"/>
    <property type="chains" value="AB=6-241"/>
</dbReference>
<dbReference type="PDB" id="4V4W">
    <property type="method" value="EM"/>
    <property type="resolution" value="15.00 A"/>
    <property type="chains" value="AB=6-241"/>
</dbReference>
<dbReference type="PDB" id="4V50">
    <property type="method" value="X-ray"/>
    <property type="resolution" value="3.22 A"/>
    <property type="chains" value="AB/CB=2-241"/>
</dbReference>
<dbReference type="PDB" id="4V52">
    <property type="method" value="X-ray"/>
    <property type="resolution" value="3.21 A"/>
    <property type="chains" value="AB/CB=2-241"/>
</dbReference>
<dbReference type="PDB" id="4V53">
    <property type="method" value="X-ray"/>
    <property type="resolution" value="3.54 A"/>
    <property type="chains" value="AB/CB=2-241"/>
</dbReference>
<dbReference type="PDB" id="4V54">
    <property type="method" value="X-ray"/>
    <property type="resolution" value="3.30 A"/>
    <property type="chains" value="AB/CB=2-241"/>
</dbReference>
<dbReference type="PDB" id="4V55">
    <property type="method" value="X-ray"/>
    <property type="resolution" value="4.00 A"/>
    <property type="chains" value="AB/CB=2-241"/>
</dbReference>
<dbReference type="PDB" id="4V56">
    <property type="method" value="X-ray"/>
    <property type="resolution" value="3.93 A"/>
    <property type="chains" value="AB/CB=2-241"/>
</dbReference>
<dbReference type="PDB" id="4V57">
    <property type="method" value="X-ray"/>
    <property type="resolution" value="3.50 A"/>
    <property type="chains" value="AB/CB=2-241"/>
</dbReference>
<dbReference type="PDB" id="4V5B">
    <property type="method" value="X-ray"/>
    <property type="resolution" value="3.74 A"/>
    <property type="chains" value="BB/DB=2-241"/>
</dbReference>
<dbReference type="PDB" id="4V5H">
    <property type="method" value="EM"/>
    <property type="resolution" value="5.80 A"/>
    <property type="chains" value="AB=9-226"/>
</dbReference>
<dbReference type="PDB" id="4V5Y">
    <property type="method" value="X-ray"/>
    <property type="resolution" value="4.45 A"/>
    <property type="chains" value="AB/CB=2-241"/>
</dbReference>
<dbReference type="PDB" id="4V64">
    <property type="method" value="X-ray"/>
    <property type="resolution" value="3.50 A"/>
    <property type="chains" value="AB/CB=2-241"/>
</dbReference>
<dbReference type="PDB" id="4V65">
    <property type="method" value="EM"/>
    <property type="resolution" value="9.00 A"/>
    <property type="chains" value="AB=1-241"/>
</dbReference>
<dbReference type="PDB" id="4V66">
    <property type="method" value="EM"/>
    <property type="resolution" value="9.00 A"/>
    <property type="chains" value="AB=1-241"/>
</dbReference>
<dbReference type="PDB" id="4V69">
    <property type="method" value="EM"/>
    <property type="resolution" value="6.70 A"/>
    <property type="chains" value="AB=9-226"/>
</dbReference>
<dbReference type="PDB" id="4V6C">
    <property type="method" value="X-ray"/>
    <property type="resolution" value="3.19 A"/>
    <property type="chains" value="AB/CB=1-241"/>
</dbReference>
<dbReference type="PDB" id="4V6D">
    <property type="method" value="X-ray"/>
    <property type="resolution" value="3.81 A"/>
    <property type="chains" value="AB/CB=1-241"/>
</dbReference>
<dbReference type="PDB" id="4V6E">
    <property type="method" value="X-ray"/>
    <property type="resolution" value="3.71 A"/>
    <property type="chains" value="AB/CB=1-241"/>
</dbReference>
<dbReference type="PDB" id="4V6K">
    <property type="method" value="EM"/>
    <property type="resolution" value="8.25 A"/>
    <property type="chains" value="BF=1-241"/>
</dbReference>
<dbReference type="PDB" id="4V6L">
    <property type="method" value="EM"/>
    <property type="resolution" value="13.20 A"/>
    <property type="chains" value="AF=1-241"/>
</dbReference>
<dbReference type="PDB" id="4V6M">
    <property type="method" value="EM"/>
    <property type="resolution" value="7.10 A"/>
    <property type="chains" value="AB=2-241"/>
</dbReference>
<dbReference type="PDB" id="4V6N">
    <property type="method" value="EM"/>
    <property type="resolution" value="12.10 A"/>
    <property type="chains" value="BE=2-241"/>
</dbReference>
<dbReference type="PDB" id="4V6O">
    <property type="method" value="EM"/>
    <property type="resolution" value="14.70 A"/>
    <property type="chains" value="AE=2-241"/>
</dbReference>
<dbReference type="PDB" id="4V6P">
    <property type="method" value="EM"/>
    <property type="resolution" value="13.50 A"/>
    <property type="chains" value="AE=2-241"/>
</dbReference>
<dbReference type="PDB" id="4V6Q">
    <property type="method" value="EM"/>
    <property type="resolution" value="11.50 A"/>
    <property type="chains" value="AE=2-241"/>
</dbReference>
<dbReference type="PDB" id="4V6R">
    <property type="method" value="EM"/>
    <property type="resolution" value="11.50 A"/>
    <property type="chains" value="AE=2-241"/>
</dbReference>
<dbReference type="PDB" id="4V6S">
    <property type="method" value="EM"/>
    <property type="resolution" value="13.10 A"/>
    <property type="chains" value="BD=2-241"/>
</dbReference>
<dbReference type="PDB" id="4V6T">
    <property type="method" value="EM"/>
    <property type="resolution" value="8.30 A"/>
    <property type="chains" value="AB=9-226"/>
</dbReference>
<dbReference type="PDB" id="4V6V">
    <property type="method" value="EM"/>
    <property type="resolution" value="9.80 A"/>
    <property type="chains" value="AB=2-241"/>
</dbReference>
<dbReference type="PDB" id="4V6Y">
    <property type="method" value="EM"/>
    <property type="resolution" value="12.00 A"/>
    <property type="chains" value="AB=9-226"/>
</dbReference>
<dbReference type="PDB" id="4V6Z">
    <property type="method" value="EM"/>
    <property type="resolution" value="12.00 A"/>
    <property type="chains" value="AB=9-226"/>
</dbReference>
<dbReference type="PDB" id="4V70">
    <property type="method" value="EM"/>
    <property type="resolution" value="17.00 A"/>
    <property type="chains" value="AB=9-226"/>
</dbReference>
<dbReference type="PDB" id="4V71">
    <property type="method" value="EM"/>
    <property type="resolution" value="20.00 A"/>
    <property type="chains" value="AB=9-226"/>
</dbReference>
<dbReference type="PDB" id="4V72">
    <property type="method" value="EM"/>
    <property type="resolution" value="13.00 A"/>
    <property type="chains" value="AB=9-226"/>
</dbReference>
<dbReference type="PDB" id="4V73">
    <property type="method" value="EM"/>
    <property type="resolution" value="15.00 A"/>
    <property type="chains" value="AB=9-226"/>
</dbReference>
<dbReference type="PDB" id="4V74">
    <property type="method" value="EM"/>
    <property type="resolution" value="17.00 A"/>
    <property type="chains" value="AB=9-226"/>
</dbReference>
<dbReference type="PDB" id="4V75">
    <property type="method" value="EM"/>
    <property type="resolution" value="12.00 A"/>
    <property type="chains" value="AB=9-226"/>
</dbReference>
<dbReference type="PDB" id="4V76">
    <property type="method" value="EM"/>
    <property type="resolution" value="17.00 A"/>
    <property type="chains" value="AB=9-226"/>
</dbReference>
<dbReference type="PDB" id="4V77">
    <property type="method" value="EM"/>
    <property type="resolution" value="17.00 A"/>
    <property type="chains" value="AB=9-226"/>
</dbReference>
<dbReference type="PDB" id="4V78">
    <property type="method" value="EM"/>
    <property type="resolution" value="20.00 A"/>
    <property type="chains" value="AB=9-226"/>
</dbReference>
<dbReference type="PDB" id="4V79">
    <property type="method" value="EM"/>
    <property type="resolution" value="15.00 A"/>
    <property type="chains" value="AB=9-226"/>
</dbReference>
<dbReference type="PDB" id="4V7A">
    <property type="method" value="EM"/>
    <property type="resolution" value="9.00 A"/>
    <property type="chains" value="AB=9-226"/>
</dbReference>
<dbReference type="PDB" id="4V7B">
    <property type="method" value="EM"/>
    <property type="resolution" value="6.80 A"/>
    <property type="chains" value="AB=1-241"/>
</dbReference>
<dbReference type="PDB" id="4V7C">
    <property type="method" value="EM"/>
    <property type="resolution" value="7.60 A"/>
    <property type="chains" value="AB=2-241"/>
</dbReference>
<dbReference type="PDB" id="4V7D">
    <property type="method" value="EM"/>
    <property type="resolution" value="7.60 A"/>
    <property type="chains" value="BB=2-241"/>
</dbReference>
<dbReference type="PDB" id="4V7I">
    <property type="method" value="EM"/>
    <property type="resolution" value="9.60 A"/>
    <property type="chains" value="BB=1-241"/>
</dbReference>
<dbReference type="PDB" id="4V7S">
    <property type="method" value="X-ray"/>
    <property type="resolution" value="3.25 A"/>
    <property type="chains" value="AB/CB=9-226"/>
</dbReference>
<dbReference type="PDB" id="4V7T">
    <property type="method" value="X-ray"/>
    <property type="resolution" value="3.19 A"/>
    <property type="chains" value="AB/CB=9-226"/>
</dbReference>
<dbReference type="PDB" id="4V7U">
    <property type="method" value="X-ray"/>
    <property type="resolution" value="3.10 A"/>
    <property type="chains" value="AB/CB=9-226"/>
</dbReference>
<dbReference type="PDB" id="4V7V">
    <property type="method" value="X-ray"/>
    <property type="resolution" value="3.29 A"/>
    <property type="chains" value="AB/CB=9-226"/>
</dbReference>
<dbReference type="PDB" id="4V85">
    <property type="method" value="X-ray"/>
    <property type="resolution" value="3.20 A"/>
    <property type="chains" value="AB=1-241"/>
</dbReference>
<dbReference type="PDB" id="4V89">
    <property type="method" value="X-ray"/>
    <property type="resolution" value="3.70 A"/>
    <property type="chains" value="AB=1-241"/>
</dbReference>
<dbReference type="PDB" id="4V9C">
    <property type="method" value="X-ray"/>
    <property type="resolution" value="3.30 A"/>
    <property type="chains" value="AB/CB=1-241"/>
</dbReference>
<dbReference type="PDB" id="4V9D">
    <property type="method" value="X-ray"/>
    <property type="resolution" value="3.00 A"/>
    <property type="chains" value="AB/BB=9-226"/>
</dbReference>
<dbReference type="PDB" id="4V9O">
    <property type="method" value="X-ray"/>
    <property type="resolution" value="2.90 A"/>
    <property type="chains" value="BB/DB/FB/HB=1-241"/>
</dbReference>
<dbReference type="PDB" id="4V9P">
    <property type="method" value="X-ray"/>
    <property type="resolution" value="2.90 A"/>
    <property type="chains" value="BB/DB/FB/HB=1-241"/>
</dbReference>
<dbReference type="PDB" id="4WF1">
    <property type="method" value="X-ray"/>
    <property type="resolution" value="3.09 A"/>
    <property type="chains" value="AB/CB=9-226"/>
</dbReference>
<dbReference type="PDB" id="4WOI">
    <property type="method" value="X-ray"/>
    <property type="resolution" value="3.00 A"/>
    <property type="chains" value="AB/DB=1-241"/>
</dbReference>
<dbReference type="PDB" id="4WWW">
    <property type="method" value="X-ray"/>
    <property type="resolution" value="3.10 A"/>
    <property type="chains" value="QB/XB=9-226"/>
</dbReference>
<dbReference type="PDB" id="4YBB">
    <property type="method" value="X-ray"/>
    <property type="resolution" value="2.10 A"/>
    <property type="chains" value="AB/BB=4-227"/>
</dbReference>
<dbReference type="PDB" id="5AFI">
    <property type="method" value="EM"/>
    <property type="resolution" value="2.90 A"/>
    <property type="chains" value="b=1-240"/>
</dbReference>
<dbReference type="PDB" id="5H5U">
    <property type="method" value="EM"/>
    <property type="resolution" value="3.00 A"/>
    <property type="chains" value="i=2-241"/>
</dbReference>
<dbReference type="PDB" id="5IQR">
    <property type="method" value="EM"/>
    <property type="resolution" value="3.00 A"/>
    <property type="chains" value="g=1-241"/>
</dbReference>
<dbReference type="PDB" id="5IT8">
    <property type="method" value="X-ray"/>
    <property type="resolution" value="3.12 A"/>
    <property type="chains" value="AB/BB=4-227"/>
</dbReference>
<dbReference type="PDB" id="5J5B">
    <property type="method" value="X-ray"/>
    <property type="resolution" value="2.80 A"/>
    <property type="chains" value="AB/BB=4-227"/>
</dbReference>
<dbReference type="PDB" id="5J7L">
    <property type="method" value="X-ray"/>
    <property type="resolution" value="3.00 A"/>
    <property type="chains" value="AB/BB=4-227"/>
</dbReference>
<dbReference type="PDB" id="5J88">
    <property type="method" value="X-ray"/>
    <property type="resolution" value="3.32 A"/>
    <property type="chains" value="AB/BB=4-227"/>
</dbReference>
<dbReference type="PDB" id="5J8A">
    <property type="method" value="X-ray"/>
    <property type="resolution" value="3.10 A"/>
    <property type="chains" value="AB/BB=4-227"/>
</dbReference>
<dbReference type="PDB" id="5J91">
    <property type="method" value="X-ray"/>
    <property type="resolution" value="2.96 A"/>
    <property type="chains" value="AB/BB=4-227"/>
</dbReference>
<dbReference type="PDB" id="5JC9">
    <property type="method" value="X-ray"/>
    <property type="resolution" value="3.03 A"/>
    <property type="chains" value="AB/BB=4-227"/>
</dbReference>
<dbReference type="PDB" id="5JTE">
    <property type="method" value="EM"/>
    <property type="resolution" value="3.60 A"/>
    <property type="chains" value="AB=1-240"/>
</dbReference>
<dbReference type="PDB" id="5JU8">
    <property type="method" value="EM"/>
    <property type="resolution" value="3.60 A"/>
    <property type="chains" value="AB=1-240"/>
</dbReference>
<dbReference type="PDB" id="5KCR">
    <property type="method" value="EM"/>
    <property type="resolution" value="3.60 A"/>
    <property type="chains" value="1b=1-241"/>
</dbReference>
<dbReference type="PDB" id="5KCS">
    <property type="method" value="EM"/>
    <property type="resolution" value="3.90 A"/>
    <property type="chains" value="1b=1-241"/>
</dbReference>
<dbReference type="PDB" id="5KPS">
    <property type="method" value="EM"/>
    <property type="resolution" value="3.90 A"/>
    <property type="chains" value="7=1-241"/>
</dbReference>
<dbReference type="PDB" id="5KPV">
    <property type="method" value="EM"/>
    <property type="resolution" value="4.10 A"/>
    <property type="chains" value="6=1-241"/>
</dbReference>
<dbReference type="PDB" id="5KPW">
    <property type="method" value="EM"/>
    <property type="resolution" value="3.90 A"/>
    <property type="chains" value="6=1-241"/>
</dbReference>
<dbReference type="PDB" id="5KPX">
    <property type="method" value="EM"/>
    <property type="resolution" value="3.90 A"/>
    <property type="chains" value="6=1-241"/>
</dbReference>
<dbReference type="PDB" id="5L3P">
    <property type="method" value="EM"/>
    <property type="resolution" value="3.70 A"/>
    <property type="chains" value="b=1-240"/>
</dbReference>
<dbReference type="PDB" id="5LZA">
    <property type="method" value="EM"/>
    <property type="resolution" value="3.60 A"/>
    <property type="chains" value="b=9-226"/>
</dbReference>
<dbReference type="PDB" id="5LZB">
    <property type="method" value="EM"/>
    <property type="resolution" value="5.30 A"/>
    <property type="chains" value="b=9-226"/>
</dbReference>
<dbReference type="PDB" id="5LZC">
    <property type="method" value="EM"/>
    <property type="resolution" value="4.80 A"/>
    <property type="chains" value="b=9-226"/>
</dbReference>
<dbReference type="PDB" id="5LZD">
    <property type="method" value="EM"/>
    <property type="resolution" value="3.40 A"/>
    <property type="chains" value="b=9-226"/>
</dbReference>
<dbReference type="PDB" id="5LZE">
    <property type="method" value="EM"/>
    <property type="resolution" value="3.50 A"/>
    <property type="chains" value="b=9-226"/>
</dbReference>
<dbReference type="PDB" id="5LZF">
    <property type="method" value="EM"/>
    <property type="resolution" value="4.60 A"/>
    <property type="chains" value="b=9-226"/>
</dbReference>
<dbReference type="PDB" id="5MDV">
    <property type="method" value="EM"/>
    <property type="resolution" value="2.97 A"/>
    <property type="chains" value="g=1-241"/>
</dbReference>
<dbReference type="PDB" id="5MDW">
    <property type="method" value="EM"/>
    <property type="resolution" value="3.06 A"/>
    <property type="chains" value="g=1-241"/>
</dbReference>
<dbReference type="PDB" id="5MDY">
    <property type="method" value="EM"/>
    <property type="resolution" value="3.35 A"/>
    <property type="chains" value="g=1-241"/>
</dbReference>
<dbReference type="PDB" id="5MDZ">
    <property type="method" value="EM"/>
    <property type="resolution" value="3.10 A"/>
    <property type="chains" value="g=1-241"/>
</dbReference>
<dbReference type="PDB" id="5ME0">
    <property type="method" value="EM"/>
    <property type="resolution" value="13.50 A"/>
    <property type="chains" value="B=1-241"/>
</dbReference>
<dbReference type="PDB" id="5ME1">
    <property type="method" value="EM"/>
    <property type="resolution" value="13.50 A"/>
    <property type="chains" value="B=1-241"/>
</dbReference>
<dbReference type="PDB" id="5MGP">
    <property type="method" value="EM"/>
    <property type="resolution" value="3.10 A"/>
    <property type="chains" value="b=9-226"/>
</dbReference>
<dbReference type="PDB" id="5MY1">
    <property type="method" value="EM"/>
    <property type="resolution" value="7.60 A"/>
    <property type="chains" value="B=2-241"/>
</dbReference>
<dbReference type="PDB" id="5NO3">
    <property type="method" value="EM"/>
    <property type="resolution" value="5.16 A"/>
    <property type="chains" value="B=4-227"/>
</dbReference>
<dbReference type="PDB" id="5NP6">
    <property type="method" value="EM"/>
    <property type="resolution" value="3.60 A"/>
    <property type="chains" value="E=9-226"/>
</dbReference>
<dbReference type="PDB" id="5NWY">
    <property type="method" value="EM"/>
    <property type="resolution" value="2.93 A"/>
    <property type="chains" value="1=9-241"/>
</dbReference>
<dbReference type="PDB" id="5O2R">
    <property type="method" value="EM"/>
    <property type="resolution" value="3.40 A"/>
    <property type="chains" value="b=9-226"/>
</dbReference>
<dbReference type="PDB" id="5U4I">
    <property type="method" value="EM"/>
    <property type="resolution" value="3.50 A"/>
    <property type="chains" value="b=1-241"/>
</dbReference>
<dbReference type="PDB" id="5U9F">
    <property type="method" value="EM"/>
    <property type="resolution" value="3.20 A"/>
    <property type="chains" value="B=1-241"/>
</dbReference>
<dbReference type="PDB" id="5U9G">
    <property type="method" value="EM"/>
    <property type="resolution" value="3.20 A"/>
    <property type="chains" value="B=1-241"/>
</dbReference>
<dbReference type="PDB" id="5UYK">
    <property type="method" value="EM"/>
    <property type="resolution" value="3.90 A"/>
    <property type="chains" value="B=9-226"/>
</dbReference>
<dbReference type="PDB" id="5UYL">
    <property type="method" value="EM"/>
    <property type="resolution" value="3.60 A"/>
    <property type="chains" value="B=9-226"/>
</dbReference>
<dbReference type="PDB" id="5UYM">
    <property type="method" value="EM"/>
    <property type="resolution" value="3.20 A"/>
    <property type="chains" value="B=9-226"/>
</dbReference>
<dbReference type="PDB" id="5UYN">
    <property type="method" value="EM"/>
    <property type="resolution" value="4.00 A"/>
    <property type="chains" value="B=9-226"/>
</dbReference>
<dbReference type="PDB" id="5UYP">
    <property type="method" value="EM"/>
    <property type="resolution" value="3.90 A"/>
    <property type="chains" value="B=9-226"/>
</dbReference>
<dbReference type="PDB" id="5UYQ">
    <property type="method" value="EM"/>
    <property type="resolution" value="3.80 A"/>
    <property type="chains" value="B=9-226"/>
</dbReference>
<dbReference type="PDB" id="5UZ4">
    <property type="method" value="EM"/>
    <property type="resolution" value="5.80 A"/>
    <property type="chains" value="B=1-241"/>
</dbReference>
<dbReference type="PDB" id="5WDT">
    <property type="method" value="EM"/>
    <property type="resolution" value="3.00 A"/>
    <property type="chains" value="b=9-226"/>
</dbReference>
<dbReference type="PDB" id="5WE4">
    <property type="method" value="EM"/>
    <property type="resolution" value="3.10 A"/>
    <property type="chains" value="b=9-226"/>
</dbReference>
<dbReference type="PDB" id="5WE6">
    <property type="method" value="EM"/>
    <property type="resolution" value="3.40 A"/>
    <property type="chains" value="b=9-226"/>
</dbReference>
<dbReference type="PDB" id="5WF0">
    <property type="method" value="EM"/>
    <property type="resolution" value="3.60 A"/>
    <property type="chains" value="b=9-226"/>
</dbReference>
<dbReference type="PDB" id="5WFK">
    <property type="method" value="EM"/>
    <property type="resolution" value="3.40 A"/>
    <property type="chains" value="b=9-226"/>
</dbReference>
<dbReference type="PDB" id="5WFS">
    <property type="method" value="EM"/>
    <property type="resolution" value="3.00 A"/>
    <property type="chains" value="b=9-226"/>
</dbReference>
<dbReference type="PDB" id="6AWB">
    <property type="method" value="EM"/>
    <property type="resolution" value="6.70 A"/>
    <property type="chains" value="E=9-226"/>
</dbReference>
<dbReference type="PDB" id="6AWC">
    <property type="method" value="EM"/>
    <property type="resolution" value="7.90 A"/>
    <property type="chains" value="E=9-226"/>
</dbReference>
<dbReference type="PDB" id="6AWD">
    <property type="method" value="EM"/>
    <property type="resolution" value="8.10 A"/>
    <property type="chains" value="E=9-226"/>
</dbReference>
<dbReference type="PDB" id="6BU8">
    <property type="method" value="EM"/>
    <property type="resolution" value="3.50 A"/>
    <property type="chains" value="B=2-226"/>
</dbReference>
<dbReference type="PDB" id="6BY1">
    <property type="method" value="X-ray"/>
    <property type="resolution" value="3.94 A"/>
    <property type="chains" value="AB/BB=2-226"/>
</dbReference>
<dbReference type="PDB" id="6C4I">
    <property type="method" value="EM"/>
    <property type="resolution" value="3.24 A"/>
    <property type="chains" value="b=1-241"/>
</dbReference>
<dbReference type="PDB" id="6DNC">
    <property type="method" value="EM"/>
    <property type="resolution" value="3.70 A"/>
    <property type="chains" value="OA=1-241"/>
</dbReference>
<dbReference type="PDB" id="6ENF">
    <property type="method" value="EM"/>
    <property type="resolution" value="3.20 A"/>
    <property type="chains" value="b=9-226"/>
</dbReference>
<dbReference type="PDB" id="6ENJ">
    <property type="method" value="EM"/>
    <property type="resolution" value="3.70 A"/>
    <property type="chains" value="b=9-226"/>
</dbReference>
<dbReference type="PDB" id="6ENU">
    <property type="method" value="EM"/>
    <property type="resolution" value="3.10 A"/>
    <property type="chains" value="b=9-226"/>
</dbReference>
<dbReference type="PDB" id="6GWT">
    <property type="method" value="EM"/>
    <property type="resolution" value="3.80 A"/>
    <property type="chains" value="b=9-226"/>
</dbReference>
<dbReference type="PDB" id="6GXM">
    <property type="method" value="EM"/>
    <property type="resolution" value="3.80 A"/>
    <property type="chains" value="b=9-226"/>
</dbReference>
<dbReference type="PDB" id="6GXN">
    <property type="method" value="EM"/>
    <property type="resolution" value="3.90 A"/>
    <property type="chains" value="b=9-226"/>
</dbReference>
<dbReference type="PDB" id="6GXO">
    <property type="method" value="EM"/>
    <property type="resolution" value="3.90 A"/>
    <property type="chains" value="b=9-226"/>
</dbReference>
<dbReference type="PDB" id="6GXP">
    <property type="method" value="EM"/>
    <property type="resolution" value="4.40 A"/>
    <property type="chains" value="b=9-226"/>
</dbReference>
<dbReference type="PDB" id="6H4N">
    <property type="method" value="EM"/>
    <property type="resolution" value="3.00 A"/>
    <property type="chains" value="b=9-226"/>
</dbReference>
<dbReference type="PDB" id="6H58">
    <property type="method" value="EM"/>
    <property type="resolution" value="7.90 A"/>
    <property type="chains" value="b/bb=9-226"/>
</dbReference>
<dbReference type="PDB" id="6HRM">
    <property type="method" value="EM"/>
    <property type="resolution" value="2.96 A"/>
    <property type="chains" value="g=3-227"/>
</dbReference>
<dbReference type="PDB" id="6I7V">
    <property type="method" value="X-ray"/>
    <property type="resolution" value="2.90 A"/>
    <property type="chains" value="AB/BB=9-226"/>
</dbReference>
<dbReference type="PDB" id="6NQB">
    <property type="method" value="EM"/>
    <property type="resolution" value="3.80 A"/>
    <property type="chains" value="B=10-226"/>
</dbReference>
<dbReference type="PDB" id="6O7K">
    <property type="method" value="EM"/>
    <property type="resolution" value="4.20 A"/>
    <property type="chains" value="j=9-226"/>
</dbReference>
<dbReference type="PDB" id="6O9J">
    <property type="method" value="EM"/>
    <property type="resolution" value="3.90 A"/>
    <property type="chains" value="7=9-226"/>
</dbReference>
<dbReference type="PDB" id="6O9K">
    <property type="method" value="EM"/>
    <property type="resolution" value="4.00 A"/>
    <property type="chains" value="b=9-226"/>
</dbReference>
<dbReference type="PDB" id="6OFX">
    <property type="method" value="EM"/>
    <property type="resolution" value="3.30 A"/>
    <property type="chains" value="G=2-226"/>
</dbReference>
<dbReference type="PDB" id="6OG7">
    <property type="method" value="EM"/>
    <property type="resolution" value="3.30 A"/>
    <property type="chains" value="G=2-226"/>
</dbReference>
<dbReference type="PDB" id="6OGF">
    <property type="method" value="EM"/>
    <property type="resolution" value="3.90 A"/>
    <property type="chains" value="G=1-241"/>
</dbReference>
<dbReference type="PDB" id="6OGG">
    <property type="method" value="EM"/>
    <property type="resolution" value="4.20 A"/>
    <property type="chains" value="G=1-241"/>
</dbReference>
<dbReference type="PDB" id="6OGI">
    <property type="method" value="EM"/>
    <property type="resolution" value="3.40 A"/>
    <property type="chains" value="G=1-241"/>
</dbReference>
<dbReference type="PDB" id="6OM6">
    <property type="method" value="EM"/>
    <property type="resolution" value="3.10 A"/>
    <property type="chains" value="g=1-241"/>
</dbReference>
<dbReference type="PDB" id="6ORE">
    <property type="method" value="EM"/>
    <property type="resolution" value="2.90 A"/>
    <property type="chains" value="g=3-227"/>
</dbReference>
<dbReference type="PDB" id="6ORL">
    <property type="method" value="EM"/>
    <property type="resolution" value="3.50 A"/>
    <property type="chains" value="g=3-227"/>
</dbReference>
<dbReference type="PDB" id="6OSK">
    <property type="method" value="EM"/>
    <property type="resolution" value="3.60 A"/>
    <property type="chains" value="g=3-227"/>
</dbReference>
<dbReference type="PDB" id="6OSQ">
    <property type="method" value="EM"/>
    <property type="resolution" value="3.50 A"/>
    <property type="chains" value="g=3-227"/>
</dbReference>
<dbReference type="PDB" id="6OST">
    <property type="method" value="EM"/>
    <property type="resolution" value="4.20 A"/>
    <property type="chains" value="g=3-227"/>
</dbReference>
<dbReference type="PDB" id="6OT3">
    <property type="method" value="EM"/>
    <property type="resolution" value="3.90 A"/>
    <property type="chains" value="g=3-227"/>
</dbReference>
<dbReference type="PDB" id="6OUO">
    <property type="method" value="EM"/>
    <property type="resolution" value="3.70 A"/>
    <property type="chains" value="g=3-227"/>
</dbReference>
<dbReference type="PDB" id="6Q97">
    <property type="method" value="EM"/>
    <property type="resolution" value="3.90 A"/>
    <property type="chains" value="g=3-227"/>
</dbReference>
<dbReference type="PDB" id="6Q98">
    <property type="method" value="EM"/>
    <property type="resolution" value="4.30 A"/>
    <property type="chains" value="g=1-241"/>
</dbReference>
<dbReference type="PDB" id="6Q9A">
    <property type="method" value="EM"/>
    <property type="resolution" value="3.70 A"/>
    <property type="chains" value="g=3-227"/>
</dbReference>
<dbReference type="PDB" id="6SZS">
    <property type="method" value="EM"/>
    <property type="resolution" value="3.06 A"/>
    <property type="chains" value="b=1-241"/>
</dbReference>
<dbReference type="PDB" id="6TBV">
    <property type="method" value="EM"/>
    <property type="resolution" value="2.70 A"/>
    <property type="chains" value="S021=1-241"/>
</dbReference>
<dbReference type="PDB" id="6TC3">
    <property type="method" value="EM"/>
    <property type="resolution" value="2.70 A"/>
    <property type="chains" value="S021=1-241"/>
</dbReference>
<dbReference type="PDB" id="6VU3">
    <property type="method" value="EM"/>
    <property type="resolution" value="3.70 A"/>
    <property type="chains" value="G=3-227"/>
</dbReference>
<dbReference type="PDB" id="6VWL">
    <property type="method" value="EM"/>
    <property type="resolution" value="3.10 A"/>
    <property type="chains" value="a=1-241"/>
</dbReference>
<dbReference type="PDB" id="6VWM">
    <property type="method" value="EM"/>
    <property type="resolution" value="3.40 A"/>
    <property type="chains" value="a=1-241"/>
</dbReference>
<dbReference type="PDB" id="6VWN">
    <property type="method" value="EM"/>
    <property type="resolution" value="3.40 A"/>
    <property type="chains" value="a=1-241"/>
</dbReference>
<dbReference type="PDB" id="6VYQ">
    <property type="method" value="EM"/>
    <property type="resolution" value="3.70 A"/>
    <property type="chains" value="G=1-241"/>
</dbReference>
<dbReference type="PDB" id="6VYR">
    <property type="method" value="EM"/>
    <property type="resolution" value="3.80 A"/>
    <property type="chains" value="G=1-241"/>
</dbReference>
<dbReference type="PDB" id="6VYS">
    <property type="method" value="EM"/>
    <property type="resolution" value="3.70 A"/>
    <property type="chains" value="G=1-241"/>
</dbReference>
<dbReference type="PDB" id="6VYT">
    <property type="method" value="EM"/>
    <property type="resolution" value="14.00 A"/>
    <property type="chains" value="G=1-241"/>
</dbReference>
<dbReference type="PDB" id="6VYU">
    <property type="method" value="EM"/>
    <property type="resolution" value="7.00 A"/>
    <property type="chains" value="G=1-241"/>
</dbReference>
<dbReference type="PDB" id="6VYW">
    <property type="method" value="EM"/>
    <property type="resolution" value="7.00 A"/>
    <property type="chains" value="G=1-241"/>
</dbReference>
<dbReference type="PDB" id="6VYX">
    <property type="method" value="EM"/>
    <property type="resolution" value="9.90 A"/>
    <property type="chains" value="G=1-241"/>
</dbReference>
<dbReference type="PDB" id="6VYY">
    <property type="method" value="EM"/>
    <property type="resolution" value="9.90 A"/>
    <property type="chains" value="G=1-241"/>
</dbReference>
<dbReference type="PDB" id="6VYZ">
    <property type="method" value="EM"/>
    <property type="resolution" value="9.90 A"/>
    <property type="chains" value="G=1-241"/>
</dbReference>
<dbReference type="PDB" id="6VZ2">
    <property type="method" value="EM"/>
    <property type="resolution" value="10.00 A"/>
    <property type="chains" value="G=1-241"/>
</dbReference>
<dbReference type="PDB" id="6VZ3">
    <property type="method" value="EM"/>
    <property type="resolution" value="8.90 A"/>
    <property type="chains" value="G=3-227"/>
</dbReference>
<dbReference type="PDB" id="6VZ5">
    <property type="method" value="EM"/>
    <property type="resolution" value="8.90 A"/>
    <property type="chains" value="G=1-241"/>
</dbReference>
<dbReference type="PDB" id="6VZ7">
    <property type="method" value="EM"/>
    <property type="resolution" value="7.00 A"/>
    <property type="chains" value="G=3-227"/>
</dbReference>
<dbReference type="PDB" id="6VZJ">
    <property type="method" value="EM"/>
    <property type="resolution" value="4.10 A"/>
    <property type="chains" value="G=1-241"/>
</dbReference>
<dbReference type="PDB" id="6W7M">
    <property type="method" value="EM"/>
    <property type="resolution" value="3.80 A"/>
    <property type="chains" value="B=1-241"/>
</dbReference>
<dbReference type="PDB" id="6WD0">
    <property type="method" value="EM"/>
    <property type="resolution" value="3.00 A"/>
    <property type="chains" value="G=2-226"/>
</dbReference>
<dbReference type="PDB" id="6WD1">
    <property type="method" value="EM"/>
    <property type="resolution" value="3.30 A"/>
    <property type="chains" value="G=2-226"/>
</dbReference>
<dbReference type="PDB" id="6WD2">
    <property type="method" value="EM"/>
    <property type="resolution" value="3.60 A"/>
    <property type="chains" value="G=2-226"/>
</dbReference>
<dbReference type="PDB" id="6WD3">
    <property type="method" value="EM"/>
    <property type="resolution" value="3.60 A"/>
    <property type="chains" value="G=2-226"/>
</dbReference>
<dbReference type="PDB" id="6WD4">
    <property type="method" value="EM"/>
    <property type="resolution" value="3.70 A"/>
    <property type="chains" value="G=2-226"/>
</dbReference>
<dbReference type="PDB" id="6WD5">
    <property type="method" value="EM"/>
    <property type="resolution" value="3.60 A"/>
    <property type="chains" value="G=2-226"/>
</dbReference>
<dbReference type="PDB" id="6WD6">
    <property type="method" value="EM"/>
    <property type="resolution" value="3.70 A"/>
    <property type="chains" value="G=2-226"/>
</dbReference>
<dbReference type="PDB" id="6WD7">
    <property type="method" value="EM"/>
    <property type="resolution" value="3.90 A"/>
    <property type="chains" value="G=2-226"/>
</dbReference>
<dbReference type="PDB" id="6WD8">
    <property type="method" value="EM"/>
    <property type="resolution" value="3.70 A"/>
    <property type="chains" value="G=2-226"/>
</dbReference>
<dbReference type="PDB" id="6WD9">
    <property type="method" value="EM"/>
    <property type="resolution" value="3.70 A"/>
    <property type="chains" value="G=2-226"/>
</dbReference>
<dbReference type="PDB" id="6WDA">
    <property type="method" value="EM"/>
    <property type="resolution" value="3.80 A"/>
    <property type="chains" value="G=2-226"/>
</dbReference>
<dbReference type="PDB" id="6WDB">
    <property type="method" value="EM"/>
    <property type="resolution" value="4.00 A"/>
    <property type="chains" value="G=2-226"/>
</dbReference>
<dbReference type="PDB" id="6WDC">
    <property type="method" value="EM"/>
    <property type="resolution" value="4.20 A"/>
    <property type="chains" value="G=2-226"/>
</dbReference>
<dbReference type="PDB" id="6WDD">
    <property type="method" value="EM"/>
    <property type="resolution" value="3.20 A"/>
    <property type="chains" value="G=2-226"/>
</dbReference>
<dbReference type="PDB" id="6WDE">
    <property type="method" value="EM"/>
    <property type="resolution" value="3.00 A"/>
    <property type="chains" value="G=2-226"/>
</dbReference>
<dbReference type="PDB" id="6WDF">
    <property type="method" value="EM"/>
    <property type="resolution" value="3.30 A"/>
    <property type="chains" value="G=2-226"/>
</dbReference>
<dbReference type="PDB" id="6WDG">
    <property type="method" value="EM"/>
    <property type="resolution" value="3.30 A"/>
    <property type="chains" value="G=2-226"/>
</dbReference>
<dbReference type="PDB" id="6WDH">
    <property type="method" value="EM"/>
    <property type="resolution" value="4.30 A"/>
    <property type="chains" value="G=2-226"/>
</dbReference>
<dbReference type="PDB" id="6WDI">
    <property type="method" value="EM"/>
    <property type="resolution" value="4.00 A"/>
    <property type="chains" value="G=2-226"/>
</dbReference>
<dbReference type="PDB" id="6WDJ">
    <property type="method" value="EM"/>
    <property type="resolution" value="3.70 A"/>
    <property type="chains" value="G=2-226"/>
</dbReference>
<dbReference type="PDB" id="6WDK">
    <property type="method" value="EM"/>
    <property type="resolution" value="3.60 A"/>
    <property type="chains" value="G=2-226"/>
</dbReference>
<dbReference type="PDB" id="6WDL">
    <property type="method" value="EM"/>
    <property type="resolution" value="3.70 A"/>
    <property type="chains" value="G=2-226"/>
</dbReference>
<dbReference type="PDB" id="6WDM">
    <property type="method" value="EM"/>
    <property type="resolution" value="3.60 A"/>
    <property type="chains" value="G=2-226"/>
</dbReference>
<dbReference type="PDB" id="6WNV">
    <property type="method" value="EM"/>
    <property type="resolution" value="3.50 A"/>
    <property type="chains" value="G=2-226"/>
</dbReference>
<dbReference type="PDB" id="6WNW">
    <property type="method" value="EM"/>
    <property type="resolution" value="3.20 A"/>
    <property type="chains" value="G=2-226"/>
</dbReference>
<dbReference type="PDB" id="6X6T">
    <property type="method" value="EM"/>
    <property type="resolution" value="3.20 A"/>
    <property type="chains" value="G=1-241"/>
</dbReference>
<dbReference type="PDB" id="6X7F">
    <property type="method" value="EM"/>
    <property type="resolution" value="3.50 A"/>
    <property type="chains" value="G=1-241"/>
</dbReference>
<dbReference type="PDB" id="6X7K">
    <property type="method" value="EM"/>
    <property type="resolution" value="3.10 A"/>
    <property type="chains" value="G=1-241"/>
</dbReference>
<dbReference type="PDB" id="6X9Q">
    <property type="method" value="EM"/>
    <property type="resolution" value="4.80 A"/>
    <property type="chains" value="G=1-241"/>
</dbReference>
<dbReference type="PDB" id="6XDQ">
    <property type="method" value="EM"/>
    <property type="resolution" value="3.70 A"/>
    <property type="chains" value="G=1-241"/>
</dbReference>
<dbReference type="PDB" id="6XDR">
    <property type="method" value="EM"/>
    <property type="resolution" value="4.70 A"/>
    <property type="chains" value="G=1-241"/>
</dbReference>
<dbReference type="PDB" id="6XE0">
    <property type="method" value="EM"/>
    <property type="resolution" value="6.80 A"/>
    <property type="chains" value="A=9-226"/>
</dbReference>
<dbReference type="PDB" id="6XGF">
    <property type="method" value="EM"/>
    <property type="resolution" value="5.00 A"/>
    <property type="chains" value="G=1-241"/>
</dbReference>
<dbReference type="PDB" id="6XII">
    <property type="method" value="EM"/>
    <property type="resolution" value="7.00 A"/>
    <property type="chains" value="G=1-241"/>
</dbReference>
<dbReference type="PDB" id="6XIJ">
    <property type="method" value="EM"/>
    <property type="resolution" value="8.00 A"/>
    <property type="chains" value="G=1-241"/>
</dbReference>
<dbReference type="PDB" id="6XZA">
    <property type="method" value="EM"/>
    <property type="resolution" value="2.66 A"/>
    <property type="chains" value="B1=4-227"/>
</dbReference>
<dbReference type="PDB" id="6XZB">
    <property type="method" value="EM"/>
    <property type="resolution" value="2.54 A"/>
    <property type="chains" value="B1=4-227"/>
</dbReference>
<dbReference type="PDB" id="6Y69">
    <property type="method" value="EM"/>
    <property type="resolution" value="2.86 A"/>
    <property type="chains" value="b=9-226"/>
</dbReference>
<dbReference type="PDB" id="6ZTJ">
    <property type="method" value="EM"/>
    <property type="resolution" value="3.40 A"/>
    <property type="chains" value="AB=1-241"/>
</dbReference>
<dbReference type="PDB" id="6ZTL">
    <property type="method" value="EM"/>
    <property type="resolution" value="3.50 A"/>
    <property type="chains" value="AB=1-241"/>
</dbReference>
<dbReference type="PDB" id="6ZTM">
    <property type="method" value="EM"/>
    <property type="resolution" value="3.30 A"/>
    <property type="chains" value="AB=1-241"/>
</dbReference>
<dbReference type="PDB" id="6ZTN">
    <property type="method" value="EM"/>
    <property type="resolution" value="3.90 A"/>
    <property type="chains" value="AB=1-241"/>
</dbReference>
<dbReference type="PDB" id="6ZTO">
    <property type="method" value="EM"/>
    <property type="resolution" value="3.00 A"/>
    <property type="chains" value="AB=1-241"/>
</dbReference>
<dbReference type="PDB" id="6ZTP">
    <property type="method" value="EM"/>
    <property type="resolution" value="3.00 A"/>
    <property type="chains" value="AB=1-241"/>
</dbReference>
<dbReference type="PDB" id="6ZU1">
    <property type="method" value="EM"/>
    <property type="resolution" value="3.00 A"/>
    <property type="chains" value="AB=1-241"/>
</dbReference>
<dbReference type="PDB" id="7ABZ">
    <property type="method" value="EM"/>
    <property type="resolution" value="3.21 A"/>
    <property type="chains" value="g=4-227"/>
</dbReference>
<dbReference type="PDB" id="7AC7">
    <property type="method" value="EM"/>
    <property type="resolution" value="3.08 A"/>
    <property type="chains" value="g=3-227"/>
</dbReference>
<dbReference type="PDB" id="7ACJ">
    <property type="method" value="EM"/>
    <property type="resolution" value="3.20 A"/>
    <property type="chains" value="g=3-227"/>
</dbReference>
<dbReference type="PDB" id="7ACR">
    <property type="method" value="EM"/>
    <property type="resolution" value="3.44 A"/>
    <property type="chains" value="g=3-227"/>
</dbReference>
<dbReference type="PDB" id="7AF3">
    <property type="method" value="EM"/>
    <property type="resolution" value="2.82 A"/>
    <property type="chains" value="B=1-241"/>
</dbReference>
<dbReference type="PDB" id="7AF5">
    <property type="method" value="EM"/>
    <property type="resolution" value="2.96 A"/>
    <property type="chains" value="B=1-241"/>
</dbReference>
<dbReference type="PDB" id="7AF8">
    <property type="method" value="EM"/>
    <property type="resolution" value="2.75 A"/>
    <property type="chains" value="B=1-241"/>
</dbReference>
<dbReference type="PDB" id="7AFA">
    <property type="method" value="EM"/>
    <property type="resolution" value="2.95 A"/>
    <property type="chains" value="B=1-241"/>
</dbReference>
<dbReference type="PDB" id="7AFD">
    <property type="method" value="EM"/>
    <property type="resolution" value="3.44 A"/>
    <property type="chains" value="B=1-241"/>
</dbReference>
<dbReference type="PDB" id="7AFH">
    <property type="method" value="EM"/>
    <property type="resolution" value="3.59 A"/>
    <property type="chains" value="B=1-241"/>
</dbReference>
<dbReference type="PDB" id="7AFK">
    <property type="method" value="EM"/>
    <property type="resolution" value="4.90 A"/>
    <property type="chains" value="B=1-241"/>
</dbReference>
<dbReference type="PDB" id="7AFN">
    <property type="method" value="EM"/>
    <property type="resolution" value="3.86 A"/>
    <property type="chains" value="B=1-241"/>
</dbReference>
<dbReference type="PDB" id="7BOE">
    <property type="method" value="EM"/>
    <property type="resolution" value="2.90 A"/>
    <property type="chains" value="B=1-241"/>
</dbReference>
<dbReference type="PDB" id="7BOH">
    <property type="method" value="EM"/>
    <property type="resolution" value="2.82 A"/>
    <property type="chains" value="B=1-241"/>
</dbReference>
<dbReference type="PDB" id="7D6Z">
    <property type="method" value="EM"/>
    <property type="resolution" value="3.40 A"/>
    <property type="chains" value="i=1-241"/>
</dbReference>
<dbReference type="PDB" id="7D80">
    <property type="method" value="EM"/>
    <property type="resolution" value="4.10 A"/>
    <property type="chains" value="C=1-241"/>
</dbReference>
<dbReference type="PDB" id="7JSS">
    <property type="method" value="EM"/>
    <property type="resolution" value="3.70 A"/>
    <property type="chains" value="G=2-226"/>
</dbReference>
<dbReference type="PDB" id="7JSW">
    <property type="method" value="EM"/>
    <property type="resolution" value="3.80 A"/>
    <property type="chains" value="G=2-226"/>
</dbReference>
<dbReference type="PDB" id="7JSZ">
    <property type="method" value="EM"/>
    <property type="resolution" value="3.70 A"/>
    <property type="chains" value="G=2-226"/>
</dbReference>
<dbReference type="PDB" id="7JT1">
    <property type="method" value="EM"/>
    <property type="resolution" value="3.30 A"/>
    <property type="chains" value="G=2-226"/>
</dbReference>
<dbReference type="PDB" id="7JT2">
    <property type="method" value="EM"/>
    <property type="resolution" value="3.50 A"/>
    <property type="chains" value="G=2-226"/>
</dbReference>
<dbReference type="PDB" id="7JT3">
    <property type="method" value="EM"/>
    <property type="resolution" value="3.70 A"/>
    <property type="chains" value="G=2-226"/>
</dbReference>
<dbReference type="PDB" id="7K00">
    <property type="method" value="EM"/>
    <property type="resolution" value="1.98 A"/>
    <property type="chains" value="B=1-241"/>
</dbReference>
<dbReference type="PDB" id="7K50">
    <property type="method" value="EM"/>
    <property type="resolution" value="3.40 A"/>
    <property type="chains" value="G=2-226"/>
</dbReference>
<dbReference type="PDB" id="7K51">
    <property type="method" value="EM"/>
    <property type="resolution" value="3.50 A"/>
    <property type="chains" value="G=2-226"/>
</dbReference>
<dbReference type="PDB" id="7K52">
    <property type="method" value="EM"/>
    <property type="resolution" value="3.40 A"/>
    <property type="chains" value="G=2-226"/>
</dbReference>
<dbReference type="PDB" id="7K53">
    <property type="method" value="EM"/>
    <property type="resolution" value="3.20 A"/>
    <property type="chains" value="G=2-226"/>
</dbReference>
<dbReference type="PDB" id="7K54">
    <property type="method" value="EM"/>
    <property type="resolution" value="3.20 A"/>
    <property type="chains" value="G=2-226"/>
</dbReference>
<dbReference type="PDB" id="7K55">
    <property type="method" value="EM"/>
    <property type="resolution" value="3.30 A"/>
    <property type="chains" value="G=2-226"/>
</dbReference>
<dbReference type="PDB" id="7LV0">
    <property type="method" value="EM"/>
    <property type="resolution" value="3.20 A"/>
    <property type="chains" value="G=2-226"/>
</dbReference>
<dbReference type="PDB" id="7M5D">
    <property type="method" value="EM"/>
    <property type="resolution" value="2.80 A"/>
    <property type="chains" value="g=3-227"/>
</dbReference>
<dbReference type="PDB" id="7N1P">
    <property type="method" value="EM"/>
    <property type="resolution" value="2.33 A"/>
    <property type="chains" value="SB=1-241"/>
</dbReference>
<dbReference type="PDB" id="7N2C">
    <property type="method" value="EM"/>
    <property type="resolution" value="2.72 A"/>
    <property type="chains" value="SB=1-241"/>
</dbReference>
<dbReference type="PDB" id="7N2U">
    <property type="method" value="EM"/>
    <property type="resolution" value="2.53 A"/>
    <property type="chains" value="SB=1-241"/>
</dbReference>
<dbReference type="PDB" id="7N2V">
    <property type="method" value="EM"/>
    <property type="resolution" value="2.54 A"/>
    <property type="chains" value="SB=1-241"/>
</dbReference>
<dbReference type="PDB" id="7N30">
    <property type="method" value="EM"/>
    <property type="resolution" value="2.66 A"/>
    <property type="chains" value="SB=1-241"/>
</dbReference>
<dbReference type="PDB" id="7N31">
    <property type="method" value="EM"/>
    <property type="resolution" value="2.69 A"/>
    <property type="chains" value="SB=1-241"/>
</dbReference>
<dbReference type="PDB" id="7NAR">
    <property type="method" value="EM"/>
    <property type="resolution" value="3.00 A"/>
    <property type="chains" value="B=1-241"/>
</dbReference>
<dbReference type="PDB" id="7NAT">
    <property type="method" value="EM"/>
    <property type="resolution" value="3.59 A"/>
    <property type="chains" value="B=1-241"/>
</dbReference>
<dbReference type="PDB" id="7NAU">
    <property type="method" value="EM"/>
    <property type="resolution" value="3.78 A"/>
    <property type="chains" value="B=1-241"/>
</dbReference>
<dbReference type="PDB" id="7NAV">
    <property type="method" value="EM"/>
    <property type="resolution" value="4.80 A"/>
    <property type="chains" value="B=1-241"/>
</dbReference>
<dbReference type="PDB" id="7NAX">
    <property type="method" value="EM"/>
    <property type="resolution" value="2.96 A"/>
    <property type="chains" value="B=1-241"/>
</dbReference>
<dbReference type="PDB" id="7NBU">
    <property type="method" value="EM"/>
    <property type="resolution" value="3.11 A"/>
    <property type="chains" value="B=4-227"/>
</dbReference>
<dbReference type="PDB" id="7O19">
    <property type="method" value="EM"/>
    <property type="resolution" value="2.90 A"/>
    <property type="chains" value="AB=1-241"/>
</dbReference>
<dbReference type="PDB" id="7O1A">
    <property type="method" value="EM"/>
    <property type="resolution" value="2.40 A"/>
    <property type="chains" value="AB=1-240"/>
</dbReference>
<dbReference type="PDB" id="7O1C">
    <property type="method" value="EM"/>
    <property type="resolution" value="2.60 A"/>
    <property type="chains" value="AB=1-241"/>
</dbReference>
<dbReference type="PDB" id="7O5H">
    <property type="method" value="EM"/>
    <property type="resolution" value="3.10 A"/>
    <property type="chains" value="B=3-227"/>
</dbReference>
<dbReference type="PDB" id="7OE0">
    <property type="method" value="EM"/>
    <property type="resolution" value="2.69 A"/>
    <property type="chains" value="B=2-241"/>
</dbReference>
<dbReference type="PDB" id="7OE1">
    <property type="method" value="EM"/>
    <property type="resolution" value="3.05 A"/>
    <property type="chains" value="B=2-241"/>
</dbReference>
<dbReference type="PDB" id="7OIZ">
    <property type="method" value="EM"/>
    <property type="resolution" value="2.90 A"/>
    <property type="chains" value="B=1-241"/>
</dbReference>
<dbReference type="PDB" id="7OJ0">
    <property type="method" value="EM"/>
    <property type="resolution" value="3.50 A"/>
    <property type="chains" value="B=1-241"/>
</dbReference>
<dbReference type="PDB" id="7OXG">
    <property type="method" value="X-ray"/>
    <property type="resolution" value="2.00 A"/>
    <property type="chains" value="C/D=20-34"/>
</dbReference>
<dbReference type="PDB" id="7OXH">
    <property type="method" value="X-ray"/>
    <property type="resolution" value="1.70 A"/>
    <property type="chains" value="B=20-34"/>
</dbReference>
<dbReference type="PDB" id="7OXI">
    <property type="method" value="X-ray"/>
    <property type="resolution" value="2.60 A"/>
    <property type="chains" value="B/C=20-34"/>
</dbReference>
<dbReference type="PDB" id="7OXJ">
    <property type="method" value="X-ray"/>
    <property type="resolution" value="1.85 A"/>
    <property type="chains" value="D=20-34"/>
</dbReference>
<dbReference type="PDB" id="7OXK">
    <property type="method" value="X-ray"/>
    <property type="resolution" value="2.80 A"/>
    <property type="chains" value="B/C=20-34"/>
</dbReference>
<dbReference type="PDB" id="7P3K">
    <property type="method" value="EM"/>
    <property type="resolution" value="2.90 A"/>
    <property type="chains" value="B=1-241"/>
</dbReference>
<dbReference type="PDB" id="7PJU">
    <property type="method" value="EM"/>
    <property type="resolution" value="9.50 A"/>
    <property type="chains" value="b=1-240"/>
</dbReference>
<dbReference type="PDB" id="7PJV">
    <property type="method" value="EM"/>
    <property type="resolution" value="3.10 A"/>
    <property type="chains" value="b=1-240"/>
</dbReference>
<dbReference type="PDB" id="7PJY">
    <property type="method" value="EM"/>
    <property type="resolution" value="3.10 A"/>
    <property type="chains" value="b=1-240"/>
</dbReference>
<dbReference type="PDB" id="7QG8">
    <property type="method" value="EM"/>
    <property type="resolution" value="3.97 A"/>
    <property type="chains" value="1=1-239"/>
</dbReference>
<dbReference type="PDB" id="7QGN">
    <property type="method" value="EM"/>
    <property type="resolution" value="3.37 A"/>
    <property type="chains" value="1=1-239"/>
</dbReference>
<dbReference type="PDB" id="7QGR">
    <property type="method" value="EM"/>
    <property type="resolution" value="5.70 A"/>
    <property type="chains" value="1=1-239"/>
</dbReference>
<dbReference type="PDB" id="7S1G">
    <property type="method" value="EM"/>
    <property type="resolution" value="2.48 A"/>
    <property type="chains" value="D=1-240"/>
</dbReference>
<dbReference type="PDB" id="7S1H">
    <property type="method" value="EM"/>
    <property type="resolution" value="2.35 A"/>
    <property type="chains" value="D=1-240"/>
</dbReference>
<dbReference type="PDB" id="7S1I">
    <property type="method" value="EM"/>
    <property type="resolution" value="2.48 A"/>
    <property type="chains" value="D=1-241"/>
</dbReference>
<dbReference type="PDB" id="7S1J">
    <property type="method" value="EM"/>
    <property type="resolution" value="2.47 A"/>
    <property type="chains" value="D=1-241"/>
</dbReference>
<dbReference type="PDB" id="7S1K">
    <property type="method" value="EM"/>
    <property type="resolution" value="2.42 A"/>
    <property type="chains" value="D=1-240"/>
</dbReference>
<dbReference type="PDB" id="7SA4">
    <property type="method" value="EM"/>
    <property type="resolution" value="2.55 A"/>
    <property type="chains" value="g=1-241"/>
</dbReference>
<dbReference type="PDB" id="7SS9">
    <property type="method" value="EM"/>
    <property type="resolution" value="3.90 A"/>
    <property type="chains" value="G=2-226"/>
</dbReference>
<dbReference type="PDB" id="7SSD">
    <property type="method" value="EM"/>
    <property type="resolution" value="3.30 A"/>
    <property type="chains" value="G=2-226"/>
</dbReference>
<dbReference type="PDB" id="7SSL">
    <property type="method" value="EM"/>
    <property type="resolution" value="3.80 A"/>
    <property type="chains" value="G=2-226"/>
</dbReference>
<dbReference type="PDB" id="7SSN">
    <property type="method" value="EM"/>
    <property type="resolution" value="3.20 A"/>
    <property type="chains" value="G=2-226"/>
</dbReference>
<dbReference type="PDB" id="7SSO">
    <property type="method" value="EM"/>
    <property type="resolution" value="3.20 A"/>
    <property type="chains" value="G=2-226"/>
</dbReference>
<dbReference type="PDB" id="7SSW">
    <property type="method" value="EM"/>
    <property type="resolution" value="3.80 A"/>
    <property type="chains" value="G=2-226"/>
</dbReference>
<dbReference type="PDB" id="7ST2">
    <property type="method" value="EM"/>
    <property type="resolution" value="2.90 A"/>
    <property type="chains" value="G=2-226"/>
</dbReference>
<dbReference type="PDB" id="7ST6">
    <property type="method" value="EM"/>
    <property type="resolution" value="3.00 A"/>
    <property type="chains" value="G=2-226"/>
</dbReference>
<dbReference type="PDB" id="7ST7">
    <property type="method" value="EM"/>
    <property type="resolution" value="3.20 A"/>
    <property type="chains" value="G=9-226"/>
</dbReference>
<dbReference type="PDB" id="7TOS">
    <property type="method" value="EM"/>
    <property type="resolution" value="2.90 A"/>
    <property type="chains" value="S02=2-226"/>
</dbReference>
<dbReference type="PDB" id="7UG7">
    <property type="method" value="EM"/>
    <property type="resolution" value="2.58 A"/>
    <property type="chains" value="SB=1-241"/>
</dbReference>
<dbReference type="PDB" id="7UPH">
    <property type="method" value="EM"/>
    <property type="resolution" value="4.18 A"/>
    <property type="chains" value="W=4-227"/>
</dbReference>
<dbReference type="PDB" id="7Y7C">
    <property type="method" value="EM"/>
    <property type="resolution" value="2.51 A"/>
    <property type="chains" value="B=1-241"/>
</dbReference>
<dbReference type="PDB" id="7Y7D">
    <property type="method" value="EM"/>
    <property type="resolution" value="2.58 A"/>
    <property type="chains" value="B=1-241"/>
</dbReference>
<dbReference type="PDB" id="7Y7E">
    <property type="method" value="EM"/>
    <property type="resolution" value="2.41 A"/>
    <property type="chains" value="B=1-241"/>
</dbReference>
<dbReference type="PDB" id="7Y7F">
    <property type="method" value="EM"/>
    <property type="resolution" value="2.43 A"/>
    <property type="chains" value="B=1-241"/>
</dbReference>
<dbReference type="PDB" id="7Y7G">
    <property type="method" value="EM"/>
    <property type="resolution" value="2.34 A"/>
    <property type="chains" value="B=1-241"/>
</dbReference>
<dbReference type="PDB" id="7Y7H">
    <property type="method" value="EM"/>
    <property type="resolution" value="2.51 A"/>
    <property type="chains" value="B=1-241"/>
</dbReference>
<dbReference type="PDB" id="7ZTA">
    <property type="method" value="EM"/>
    <property type="resolution" value="2.70 A"/>
    <property type="chains" value="S021=4-227"/>
</dbReference>
<dbReference type="PDB" id="8A3L">
    <property type="method" value="EM"/>
    <property type="resolution" value="3.42 A"/>
    <property type="chains" value="B=4-227"/>
</dbReference>
<dbReference type="PDB" id="8AKN">
    <property type="method" value="EM"/>
    <property type="resolution" value="2.30 A"/>
    <property type="chains" value="C=1-241"/>
</dbReference>
<dbReference type="PDB" id="8AM9">
    <property type="method" value="EM"/>
    <property type="resolution" value="2.80 A"/>
    <property type="chains" value="C=1-241"/>
</dbReference>
<dbReference type="PDB" id="8AYE">
    <property type="method" value="EM"/>
    <property type="resolution" value="1.96 A"/>
    <property type="chains" value="B=1-241"/>
</dbReference>
<dbReference type="PDB" id="8B0X">
    <property type="method" value="EM"/>
    <property type="resolution" value="1.55 A"/>
    <property type="chains" value="B=1-241"/>
</dbReference>
<dbReference type="PDB" id="8B7Y">
    <property type="method" value="EM"/>
    <property type="resolution" value="3.00 A"/>
    <property type="chains" value="D=1-241"/>
</dbReference>
<dbReference type="PDB" id="8BF7">
    <property type="method" value="EM"/>
    <property type="resolution" value="2.33 A"/>
    <property type="chains" value="f=1-241"/>
</dbReference>
<dbReference type="PDB" id="8BGE">
    <property type="method" value="EM"/>
    <property type="resolution" value="2.11 A"/>
    <property type="chains" value="f=1-241"/>
</dbReference>
<dbReference type="PDB" id="8BGH">
    <property type="method" value="EM"/>
    <property type="resolution" value="2.88 A"/>
    <property type="chains" value="f=1-241"/>
</dbReference>
<dbReference type="PDB" id="8BH4">
    <property type="method" value="EM"/>
    <property type="resolution" value="2.62 A"/>
    <property type="chains" value="f=1-241"/>
</dbReference>
<dbReference type="PDB" id="8BHJ">
    <property type="method" value="EM"/>
    <property type="resolution" value="2.81 A"/>
    <property type="chains" value="f=1-241"/>
</dbReference>
<dbReference type="PDB" id="8BHL">
    <property type="method" value="EM"/>
    <property type="resolution" value="2.21 A"/>
    <property type="chains" value="f=1-241"/>
</dbReference>
<dbReference type="PDB" id="8BHN">
    <property type="method" value="EM"/>
    <property type="resolution" value="2.85 A"/>
    <property type="chains" value="f=1-241"/>
</dbReference>
<dbReference type="PDB" id="8BHP">
    <property type="method" value="EM"/>
    <property type="resolution" value="2.37 A"/>
    <property type="chains" value="f=1-241"/>
</dbReference>
<dbReference type="PDB" id="8BIL">
    <property type="method" value="EM"/>
    <property type="resolution" value="2.04 A"/>
    <property type="chains" value="f=1-241"/>
</dbReference>
<dbReference type="PDB" id="8BIM">
    <property type="method" value="EM"/>
    <property type="resolution" value="2.04 A"/>
    <property type="chains" value="f=1-241"/>
</dbReference>
<dbReference type="PDB" id="8CAI">
    <property type="method" value="EM"/>
    <property type="resolution" value="2.08 A"/>
    <property type="chains" value="B=1-241"/>
</dbReference>
<dbReference type="PDB" id="8CAZ">
    <property type="method" value="EM"/>
    <property type="resolution" value="2.11 A"/>
    <property type="chains" value="B=1-241"/>
</dbReference>
<dbReference type="PDB" id="8CF1">
    <property type="method" value="EM"/>
    <property type="resolution" value="1.82 A"/>
    <property type="chains" value="B=1-241"/>
</dbReference>
<dbReference type="PDB" id="8CF8">
    <property type="method" value="EM"/>
    <property type="resolution" value="2.20 A"/>
    <property type="chains" value="B=1-241"/>
</dbReference>
<dbReference type="PDB" id="8CGJ">
    <property type="method" value="EM"/>
    <property type="resolution" value="1.79 A"/>
    <property type="chains" value="B=1-241"/>
</dbReference>
<dbReference type="PDB" id="8EIU">
    <property type="method" value="EM"/>
    <property type="resolution" value="2.24 A"/>
    <property type="chains" value="B=1-241"/>
</dbReference>
<dbReference type="PDB" id="8EKC">
    <property type="method" value="EM"/>
    <property type="resolution" value="2.70 A"/>
    <property type="chains" value="b=1-241"/>
</dbReference>
<dbReference type="PDB" id="8EMM">
    <property type="method" value="EM"/>
    <property type="resolution" value="2.10 A"/>
    <property type="chains" value="B=1-241"/>
</dbReference>
<dbReference type="PDB" id="8EYT">
    <property type="method" value="EM"/>
    <property type="resolution" value="2.80 A"/>
    <property type="chains" value="B=1-241"/>
</dbReference>
<dbReference type="PDB" id="8FIZ">
    <property type="method" value="EM"/>
    <property type="resolution" value="3.80 A"/>
    <property type="chains" value="AJ=1-241"/>
</dbReference>
<dbReference type="PDB" id="8FTO">
    <property type="method" value="EM"/>
    <property type="resolution" value="1.85 A"/>
    <property type="chains" value="B=1-241"/>
</dbReference>
<dbReference type="PDB" id="8FZD">
    <property type="method" value="EM"/>
    <property type="resolution" value="3.10 A"/>
    <property type="chains" value="b=1-241"/>
</dbReference>
<dbReference type="PDB" id="8FZE">
    <property type="method" value="EM"/>
    <property type="resolution" value="3.00 A"/>
    <property type="chains" value="b=1-241"/>
</dbReference>
<dbReference type="PDB" id="8FZF">
    <property type="method" value="EM"/>
    <property type="resolution" value="3.20 A"/>
    <property type="chains" value="b=1-241"/>
</dbReference>
<dbReference type="PDB" id="8FZG">
    <property type="method" value="EM"/>
    <property type="resolution" value="3.10 A"/>
    <property type="chains" value="b=1-241"/>
</dbReference>
<dbReference type="PDB" id="8FZH">
    <property type="method" value="EM"/>
    <property type="resolution" value="2.90 A"/>
    <property type="chains" value="b=1-241"/>
</dbReference>
<dbReference type="PDB" id="8FZI">
    <property type="method" value="EM"/>
    <property type="resolution" value="3.10 A"/>
    <property type="chains" value="b=1-241"/>
</dbReference>
<dbReference type="PDB" id="8FZJ">
    <property type="method" value="EM"/>
    <property type="resolution" value="3.00 A"/>
    <property type="chains" value="b=1-241"/>
</dbReference>
<dbReference type="PDB" id="8G2U">
    <property type="method" value="EM"/>
    <property type="resolution" value="3.00 A"/>
    <property type="chains" value="a=9-226"/>
</dbReference>
<dbReference type="PDB" id="8G31">
    <property type="method" value="EM"/>
    <property type="resolution" value="3.20 A"/>
    <property type="chains" value="w=9-226"/>
</dbReference>
<dbReference type="PDB" id="8G34">
    <property type="method" value="EM"/>
    <property type="resolution" value="3.20 A"/>
    <property type="chains" value="w=9-226"/>
</dbReference>
<dbReference type="PDB" id="8G38">
    <property type="method" value="EM"/>
    <property type="resolution" value="3.20 A"/>
    <property type="chains" value="w=9-226"/>
</dbReference>
<dbReference type="PDB" id="8G6W">
    <property type="method" value="EM"/>
    <property type="resolution" value="2.02 A"/>
    <property type="chains" value="B=1-241"/>
</dbReference>
<dbReference type="PDB" id="8G7P">
    <property type="method" value="EM"/>
    <property type="resolution" value="2.90 A"/>
    <property type="chains" value="b=1-241"/>
</dbReference>
<dbReference type="PDB" id="8G7Q">
    <property type="method" value="EM"/>
    <property type="resolution" value="3.10 A"/>
    <property type="chains" value="b=1-241"/>
</dbReference>
<dbReference type="PDB" id="8G7R">
    <property type="method" value="EM"/>
    <property type="resolution" value="2.80 A"/>
    <property type="chains" value="b=1-241"/>
</dbReference>
<dbReference type="PDB" id="8G7S">
    <property type="method" value="EM"/>
    <property type="resolution" value="3.10 A"/>
    <property type="chains" value="b=1-241"/>
</dbReference>
<dbReference type="PDB" id="8HSP">
    <property type="method" value="EM"/>
    <property type="resolution" value="2.32 A"/>
    <property type="chains" value="B=1-241"/>
</dbReference>
<dbReference type="PDB" id="8HTZ">
    <property type="method" value="EM"/>
    <property type="resolution" value="2.40 A"/>
    <property type="chains" value="B=1-241"/>
</dbReference>
<dbReference type="PDB" id="8HU1">
    <property type="method" value="EM"/>
    <property type="resolution" value="2.69 A"/>
    <property type="chains" value="B=1-241"/>
</dbReference>
<dbReference type="PDB" id="8IFB">
    <property type="method" value="EM"/>
    <property type="resolution" value="2.43 A"/>
    <property type="chains" value="B=1-241"/>
</dbReference>
<dbReference type="PDB" id="8IFC">
    <property type="method" value="EM"/>
    <property type="resolution" value="2.90 A"/>
    <property type="chains" value="B=1-241"/>
</dbReference>
<dbReference type="PDB" id="8JSG">
    <property type="method" value="EM"/>
    <property type="resolution" value="4.60 A"/>
    <property type="chains" value="j=2-226"/>
</dbReference>
<dbReference type="PDB" id="8K3O">
    <property type="method" value="EM"/>
    <property type="resolution" value="3.88 A"/>
    <property type="chains" value="B=1-241"/>
</dbReference>
<dbReference type="PDB" id="8K4E">
    <property type="method" value="EM"/>
    <property type="resolution" value="3.40 A"/>
    <property type="chains" value="B=1-241"/>
</dbReference>
<dbReference type="PDB" id="8P16">
    <property type="method" value="EM"/>
    <property type="resolution" value="2.77 A"/>
    <property type="chains" value="g=1-241"/>
</dbReference>
<dbReference type="PDB" id="8P17">
    <property type="method" value="EM"/>
    <property type="resolution" value="2.78 A"/>
    <property type="chains" value="g=1-241"/>
</dbReference>
<dbReference type="PDB" id="8P18">
    <property type="method" value="EM"/>
    <property type="resolution" value="2.77 A"/>
    <property type="chains" value="g=1-241"/>
</dbReference>
<dbReference type="PDB" id="8PEG">
    <property type="method" value="EM"/>
    <property type="resolution" value="3.30 A"/>
    <property type="chains" value="B=1-241"/>
</dbReference>
<dbReference type="PDB" id="8PHJ">
    <property type="method" value="EM"/>
    <property type="resolution" value="3.67 A"/>
    <property type="chains" value="B=1-241"/>
</dbReference>
<dbReference type="PDB" id="8PKL">
    <property type="method" value="EM"/>
    <property type="resolution" value="3.09 A"/>
    <property type="chains" value="B=1-241"/>
</dbReference>
<dbReference type="PDB" id="8PVA">
    <property type="method" value="EM"/>
    <property type="resolution" value="4.50 A"/>
    <property type="chains" value="B=1-241"/>
</dbReference>
<dbReference type="PDB" id="8Q4F">
    <property type="method" value="EM"/>
    <property type="resolution" value="3.10 A"/>
    <property type="chains" value="B=1-241"/>
</dbReference>
<dbReference type="PDB" id="8QBT">
    <property type="method" value="EM"/>
    <property type="resolution" value="2.20 A"/>
    <property type="chains" value="j=1-241"/>
</dbReference>
<dbReference type="PDB" id="8QK7">
    <property type="method" value="EM"/>
    <property type="resolution" value="2.77 A"/>
    <property type="chains" value="g=1-241"/>
</dbReference>
<dbReference type="PDB" id="8QOA">
    <property type="method" value="EM"/>
    <property type="resolution" value="2.00 A"/>
    <property type="chains" value="B=1-241"/>
</dbReference>
<dbReference type="PDB" id="8R3V">
    <property type="method" value="EM"/>
    <property type="resolution" value="3.28 A"/>
    <property type="chains" value="B/B2=1-241"/>
</dbReference>
<dbReference type="PDB" id="8R6C">
    <property type="method" value="EM"/>
    <property type="resolution" value="2.20 A"/>
    <property type="chains" value="B=1-241"/>
</dbReference>
<dbReference type="PDB" id="8R8M">
    <property type="method" value="EM"/>
    <property type="resolution" value="2.40 A"/>
    <property type="chains" value="B=1-241"/>
</dbReference>
<dbReference type="PDB" id="8RCL">
    <property type="method" value="EM"/>
    <property type="resolution" value="3.49 A"/>
    <property type="chains" value="B/B2=1-241"/>
</dbReference>
<dbReference type="PDB" id="8RCM">
    <property type="method" value="EM"/>
    <property type="resolution" value="3.59 A"/>
    <property type="chains" value="B/B2=1-241"/>
</dbReference>
<dbReference type="PDB" id="8RCS">
    <property type="method" value="EM"/>
    <property type="resolution" value="4.46 A"/>
    <property type="chains" value="B/B2=1-241"/>
</dbReference>
<dbReference type="PDB" id="8RCT">
    <property type="method" value="EM"/>
    <property type="resolution" value="5.32 A"/>
    <property type="chains" value="B/B2=1-241"/>
</dbReference>
<dbReference type="PDB" id="8SYL">
    <property type="method" value="EM"/>
    <property type="resolution" value="2.90 A"/>
    <property type="chains" value="b=1-241"/>
</dbReference>
<dbReference type="PDB" id="8T5D">
    <property type="method" value="EM"/>
    <property type="resolution" value="3.20 A"/>
    <property type="chains" value="a=9-226"/>
</dbReference>
<dbReference type="PDB" id="8UPO">
    <property type="method" value="EM"/>
    <property type="resolution" value="5.50 A"/>
    <property type="chains" value="G=1-241"/>
</dbReference>
<dbReference type="PDB" id="8UPR">
    <property type="method" value="EM"/>
    <property type="resolution" value="5.30 A"/>
    <property type="chains" value="G=1-241"/>
</dbReference>
<dbReference type="PDB" id="8UQL">
    <property type="method" value="EM"/>
    <property type="resolution" value="3.20 A"/>
    <property type="chains" value="G=1-241"/>
</dbReference>
<dbReference type="PDB" id="8UQM">
    <property type="method" value="EM"/>
    <property type="resolution" value="5.30 A"/>
    <property type="chains" value="G=1-241"/>
</dbReference>
<dbReference type="PDB" id="8UQP">
    <property type="method" value="EM"/>
    <property type="resolution" value="3.80 A"/>
    <property type="chains" value="G=1-241"/>
</dbReference>
<dbReference type="PDB" id="8UR0">
    <property type="method" value="EM"/>
    <property type="resolution" value="3.40 A"/>
    <property type="chains" value="G=1-241"/>
</dbReference>
<dbReference type="PDB" id="8URH">
    <property type="method" value="EM"/>
    <property type="resolution" value="5.70 A"/>
    <property type="chains" value="G=1-241"/>
</dbReference>
<dbReference type="PDB" id="8URI">
    <property type="method" value="EM"/>
    <property type="resolution" value="5.30 A"/>
    <property type="chains" value="G=1-241"/>
</dbReference>
<dbReference type="PDB" id="8URX">
    <property type="method" value="EM"/>
    <property type="resolution" value="6.60 A"/>
    <property type="chains" value="G=1-241"/>
</dbReference>
<dbReference type="PDB" id="8URY">
    <property type="method" value="EM"/>
    <property type="resolution" value="3.10 A"/>
    <property type="chains" value="G=1-241"/>
</dbReference>
<dbReference type="PDB" id="8VS9">
    <property type="method" value="EM"/>
    <property type="resolution" value="3.90 A"/>
    <property type="chains" value="S02=1-241"/>
</dbReference>
<dbReference type="PDB" id="8VSA">
    <property type="method" value="EM"/>
    <property type="resolution" value="3.70 A"/>
    <property type="chains" value="S02=1-241"/>
</dbReference>
<dbReference type="PDB" id="8YUO">
    <property type="method" value="EM"/>
    <property type="resolution" value="2.25 A"/>
    <property type="chains" value="B=1-241"/>
</dbReference>
<dbReference type="PDB" id="8YUP">
    <property type="method" value="EM"/>
    <property type="resolution" value="2.39 A"/>
    <property type="chains" value="B=1-241"/>
</dbReference>
<dbReference type="PDB" id="8YUQ">
    <property type="method" value="EM"/>
    <property type="resolution" value="2.41 A"/>
    <property type="chains" value="B=1-241"/>
</dbReference>
<dbReference type="PDB" id="8YUR">
    <property type="method" value="EM"/>
    <property type="resolution" value="2.47 A"/>
    <property type="chains" value="B=1-241"/>
</dbReference>
<dbReference type="PDB" id="8YUS">
    <property type="method" value="EM"/>
    <property type="resolution" value="2.43 A"/>
    <property type="chains" value="B=1-241"/>
</dbReference>
<dbReference type="PDB" id="9DUK">
    <property type="method" value="EM"/>
    <property type="resolution" value="2.56 A"/>
    <property type="chains" value="B=1-234"/>
</dbReference>
<dbReference type="PDB" id="9DUL">
    <property type="method" value="EM"/>
    <property type="resolution" value="2.56 A"/>
    <property type="chains" value="B=1-234"/>
</dbReference>
<dbReference type="PDB" id="9FBV">
    <property type="method" value="EM"/>
    <property type="resolution" value="2.40 A"/>
    <property type="chains" value="B=1-241"/>
</dbReference>
<dbReference type="PDB" id="9GFT">
    <property type="method" value="EM"/>
    <property type="resolution" value="3.10 A"/>
    <property type="chains" value="1/AB=1-241"/>
</dbReference>
<dbReference type="PDB" id="9GGR">
    <property type="method" value="EM"/>
    <property type="resolution" value="3.20 A"/>
    <property type="chains" value="1/AB=1-241"/>
</dbReference>
<dbReference type="PDB" id="9GUP">
    <property type="method" value="EM"/>
    <property type="resolution" value="2.80 A"/>
    <property type="chains" value="C=1-241"/>
</dbReference>
<dbReference type="PDB" id="9GUQ">
    <property type="method" value="EM"/>
    <property type="resolution" value="3.10 A"/>
    <property type="chains" value="C=1-241"/>
</dbReference>
<dbReference type="PDB" id="9GUS">
    <property type="method" value="EM"/>
    <property type="resolution" value="3.50 A"/>
    <property type="chains" value="C=1-241"/>
</dbReference>
<dbReference type="PDB" id="9GUT">
    <property type="method" value="EM"/>
    <property type="resolution" value="2.80 A"/>
    <property type="chains" value="C=1-241"/>
</dbReference>
<dbReference type="PDB" id="9GUU">
    <property type="method" value="EM"/>
    <property type="resolution" value="2.50 A"/>
    <property type="chains" value="C=1-241"/>
</dbReference>
<dbReference type="PDB" id="9GUV">
    <property type="method" value="EM"/>
    <property type="resolution" value="3.00 A"/>
    <property type="chains" value="C=1-241"/>
</dbReference>
<dbReference type="PDB" id="9GUW">
    <property type="method" value="EM"/>
    <property type="resolution" value="3.10 A"/>
    <property type="chains" value="C=1-241"/>
</dbReference>
<dbReference type="PDB" id="9GUX">
    <property type="method" value="EM"/>
    <property type="resolution" value="3.30 A"/>
    <property type="chains" value="C=1-241"/>
</dbReference>
<dbReference type="PDB" id="9MOR">
    <property type="method" value="EM"/>
    <property type="resolution" value="2.65 A"/>
    <property type="chains" value="g=1-241"/>
</dbReference>
<dbReference type="PDB" id="9MQ4">
    <property type="method" value="EM"/>
    <property type="resolution" value="2.78 A"/>
    <property type="chains" value="g=1-241"/>
</dbReference>
<dbReference type="PDBsum" id="2YKR"/>
<dbReference type="PDBsum" id="3J9Y"/>
<dbReference type="PDBsum" id="3J9Z"/>
<dbReference type="PDBsum" id="3JA1"/>
<dbReference type="PDBsum" id="3JBU"/>
<dbReference type="PDBsum" id="3JBV"/>
<dbReference type="PDBsum" id="3JCD"/>
<dbReference type="PDBsum" id="3JCE"/>
<dbReference type="PDBsum" id="3JCJ"/>
<dbReference type="PDBsum" id="3JCN"/>
<dbReference type="PDBsum" id="4A2I"/>
<dbReference type="PDBsum" id="4ADV"/>
<dbReference type="PDBsum" id="4ODL"/>
<dbReference type="PDBsum" id="4ODM"/>
<dbReference type="PDBsum" id="4ODN"/>
<dbReference type="PDBsum" id="4ODP"/>
<dbReference type="PDBsum" id="4TOI"/>
<dbReference type="PDBsum" id="4U1U"/>
<dbReference type="PDBsum" id="4U1V"/>
<dbReference type="PDBsum" id="4U20"/>
<dbReference type="PDBsum" id="4U24"/>
<dbReference type="PDBsum" id="4U25"/>
<dbReference type="PDBsum" id="4U26"/>
<dbReference type="PDBsum" id="4U27"/>
<dbReference type="PDBsum" id="4V48"/>
<dbReference type="PDBsum" id="4V4H"/>
<dbReference type="PDBsum" id="4V4Q"/>
<dbReference type="PDBsum" id="4V4V"/>
<dbReference type="PDBsum" id="4V4W"/>
<dbReference type="PDBsum" id="4V50"/>
<dbReference type="PDBsum" id="4V52"/>
<dbReference type="PDBsum" id="4V53"/>
<dbReference type="PDBsum" id="4V54"/>
<dbReference type="PDBsum" id="4V55"/>
<dbReference type="PDBsum" id="4V56"/>
<dbReference type="PDBsum" id="4V57"/>
<dbReference type="PDBsum" id="4V5B"/>
<dbReference type="PDBsum" id="4V5H"/>
<dbReference type="PDBsum" id="4V5Y"/>
<dbReference type="PDBsum" id="4V64"/>
<dbReference type="PDBsum" id="4V65"/>
<dbReference type="PDBsum" id="4V66"/>
<dbReference type="PDBsum" id="4V69"/>
<dbReference type="PDBsum" id="4V6C"/>
<dbReference type="PDBsum" id="4V6D"/>
<dbReference type="PDBsum" id="4V6E"/>
<dbReference type="PDBsum" id="4V6K"/>
<dbReference type="PDBsum" id="4V6L"/>
<dbReference type="PDBsum" id="4V6M"/>
<dbReference type="PDBsum" id="4V6N"/>
<dbReference type="PDBsum" id="4V6O"/>
<dbReference type="PDBsum" id="4V6P"/>
<dbReference type="PDBsum" id="4V6Q"/>
<dbReference type="PDBsum" id="4V6R"/>
<dbReference type="PDBsum" id="4V6S"/>
<dbReference type="PDBsum" id="4V6T"/>
<dbReference type="PDBsum" id="4V6V"/>
<dbReference type="PDBsum" id="4V6Y"/>
<dbReference type="PDBsum" id="4V6Z"/>
<dbReference type="PDBsum" id="4V70"/>
<dbReference type="PDBsum" id="4V71"/>
<dbReference type="PDBsum" id="4V72"/>
<dbReference type="PDBsum" id="4V73"/>
<dbReference type="PDBsum" id="4V74"/>
<dbReference type="PDBsum" id="4V75"/>
<dbReference type="PDBsum" id="4V76"/>
<dbReference type="PDBsum" id="4V77"/>
<dbReference type="PDBsum" id="4V78"/>
<dbReference type="PDBsum" id="4V79"/>
<dbReference type="PDBsum" id="4V7A"/>
<dbReference type="PDBsum" id="4V7B"/>
<dbReference type="PDBsum" id="4V7C"/>
<dbReference type="PDBsum" id="4V7D"/>
<dbReference type="PDBsum" id="4V7I"/>
<dbReference type="PDBsum" id="4V7S"/>
<dbReference type="PDBsum" id="4V7T"/>
<dbReference type="PDBsum" id="4V7U"/>
<dbReference type="PDBsum" id="4V7V"/>
<dbReference type="PDBsum" id="4V85"/>
<dbReference type="PDBsum" id="4V89"/>
<dbReference type="PDBsum" id="4V9C"/>
<dbReference type="PDBsum" id="4V9D"/>
<dbReference type="PDBsum" id="4V9O"/>
<dbReference type="PDBsum" id="4V9P"/>
<dbReference type="PDBsum" id="4WF1"/>
<dbReference type="PDBsum" id="4WOI"/>
<dbReference type="PDBsum" id="4WWW"/>
<dbReference type="PDBsum" id="4YBB"/>
<dbReference type="PDBsum" id="5AFI"/>
<dbReference type="PDBsum" id="5H5U"/>
<dbReference type="PDBsum" id="5IQR"/>
<dbReference type="PDBsum" id="5IT8"/>
<dbReference type="PDBsum" id="5J5B"/>
<dbReference type="PDBsum" id="5J7L"/>
<dbReference type="PDBsum" id="5J88"/>
<dbReference type="PDBsum" id="5J8A"/>
<dbReference type="PDBsum" id="5J91"/>
<dbReference type="PDBsum" id="5JC9"/>
<dbReference type="PDBsum" id="5JTE"/>
<dbReference type="PDBsum" id="5JU8"/>
<dbReference type="PDBsum" id="5KCR"/>
<dbReference type="PDBsum" id="5KCS"/>
<dbReference type="PDBsum" id="5KPS"/>
<dbReference type="PDBsum" id="5KPV"/>
<dbReference type="PDBsum" id="5KPW"/>
<dbReference type="PDBsum" id="5KPX"/>
<dbReference type="PDBsum" id="5L3P"/>
<dbReference type="PDBsum" id="5LZA"/>
<dbReference type="PDBsum" id="5LZB"/>
<dbReference type="PDBsum" id="5LZC"/>
<dbReference type="PDBsum" id="5LZD"/>
<dbReference type="PDBsum" id="5LZE"/>
<dbReference type="PDBsum" id="5LZF"/>
<dbReference type="PDBsum" id="5MDV"/>
<dbReference type="PDBsum" id="5MDW"/>
<dbReference type="PDBsum" id="5MDY"/>
<dbReference type="PDBsum" id="5MDZ"/>
<dbReference type="PDBsum" id="5ME0"/>
<dbReference type="PDBsum" id="5ME1"/>
<dbReference type="PDBsum" id="5MGP"/>
<dbReference type="PDBsum" id="5MY1"/>
<dbReference type="PDBsum" id="5NO3"/>
<dbReference type="PDBsum" id="5NP6"/>
<dbReference type="PDBsum" id="5NWY"/>
<dbReference type="PDBsum" id="5O2R"/>
<dbReference type="PDBsum" id="5U4I"/>
<dbReference type="PDBsum" id="5U9F"/>
<dbReference type="PDBsum" id="5U9G"/>
<dbReference type="PDBsum" id="5UYK"/>
<dbReference type="PDBsum" id="5UYL"/>
<dbReference type="PDBsum" id="5UYM"/>
<dbReference type="PDBsum" id="5UYN"/>
<dbReference type="PDBsum" id="5UYP"/>
<dbReference type="PDBsum" id="5UYQ"/>
<dbReference type="PDBsum" id="5UZ4"/>
<dbReference type="PDBsum" id="5WDT"/>
<dbReference type="PDBsum" id="5WE4"/>
<dbReference type="PDBsum" id="5WE6"/>
<dbReference type="PDBsum" id="5WF0"/>
<dbReference type="PDBsum" id="5WFK"/>
<dbReference type="PDBsum" id="5WFS"/>
<dbReference type="PDBsum" id="6AWB"/>
<dbReference type="PDBsum" id="6AWC"/>
<dbReference type="PDBsum" id="6AWD"/>
<dbReference type="PDBsum" id="6BU8"/>
<dbReference type="PDBsum" id="6BY1"/>
<dbReference type="PDBsum" id="6C4I"/>
<dbReference type="PDBsum" id="6DNC"/>
<dbReference type="PDBsum" id="6ENF"/>
<dbReference type="PDBsum" id="6ENJ"/>
<dbReference type="PDBsum" id="6ENU"/>
<dbReference type="PDBsum" id="6GWT"/>
<dbReference type="PDBsum" id="6GXM"/>
<dbReference type="PDBsum" id="6GXN"/>
<dbReference type="PDBsum" id="6GXO"/>
<dbReference type="PDBsum" id="6GXP"/>
<dbReference type="PDBsum" id="6H4N"/>
<dbReference type="PDBsum" id="6H58"/>
<dbReference type="PDBsum" id="6HRM"/>
<dbReference type="PDBsum" id="6I7V"/>
<dbReference type="PDBsum" id="6NQB"/>
<dbReference type="PDBsum" id="6O7K"/>
<dbReference type="PDBsum" id="6O9J"/>
<dbReference type="PDBsum" id="6O9K"/>
<dbReference type="PDBsum" id="6OFX"/>
<dbReference type="PDBsum" id="6OG7"/>
<dbReference type="PDBsum" id="6OGF"/>
<dbReference type="PDBsum" id="6OGG"/>
<dbReference type="PDBsum" id="6OGI"/>
<dbReference type="PDBsum" id="6OM6"/>
<dbReference type="PDBsum" id="6ORE"/>
<dbReference type="PDBsum" id="6ORL"/>
<dbReference type="PDBsum" id="6OSK"/>
<dbReference type="PDBsum" id="6OSQ"/>
<dbReference type="PDBsum" id="6OST"/>
<dbReference type="PDBsum" id="6OT3"/>
<dbReference type="PDBsum" id="6OUO"/>
<dbReference type="PDBsum" id="6Q97"/>
<dbReference type="PDBsum" id="6Q98"/>
<dbReference type="PDBsum" id="6Q9A"/>
<dbReference type="PDBsum" id="6SZS"/>
<dbReference type="PDBsum" id="6TBV"/>
<dbReference type="PDBsum" id="6TC3"/>
<dbReference type="PDBsum" id="6VU3"/>
<dbReference type="PDBsum" id="6VWL"/>
<dbReference type="PDBsum" id="6VWM"/>
<dbReference type="PDBsum" id="6VWN"/>
<dbReference type="PDBsum" id="6VYQ"/>
<dbReference type="PDBsum" id="6VYR"/>
<dbReference type="PDBsum" id="6VYS"/>
<dbReference type="PDBsum" id="6VYT"/>
<dbReference type="PDBsum" id="6VYU"/>
<dbReference type="PDBsum" id="6VYW"/>
<dbReference type="PDBsum" id="6VYX"/>
<dbReference type="PDBsum" id="6VYY"/>
<dbReference type="PDBsum" id="6VYZ"/>
<dbReference type="PDBsum" id="6VZ2"/>
<dbReference type="PDBsum" id="6VZ3"/>
<dbReference type="PDBsum" id="6VZ5"/>
<dbReference type="PDBsum" id="6VZ7"/>
<dbReference type="PDBsum" id="6VZJ"/>
<dbReference type="PDBsum" id="6W7M"/>
<dbReference type="PDBsum" id="6WD0"/>
<dbReference type="PDBsum" id="6WD1"/>
<dbReference type="PDBsum" id="6WD2"/>
<dbReference type="PDBsum" id="6WD3"/>
<dbReference type="PDBsum" id="6WD4"/>
<dbReference type="PDBsum" id="6WD5"/>
<dbReference type="PDBsum" id="6WD6"/>
<dbReference type="PDBsum" id="6WD7"/>
<dbReference type="PDBsum" id="6WD8"/>
<dbReference type="PDBsum" id="6WD9"/>
<dbReference type="PDBsum" id="6WDA"/>
<dbReference type="PDBsum" id="6WDB"/>
<dbReference type="PDBsum" id="6WDC"/>
<dbReference type="PDBsum" id="6WDD"/>
<dbReference type="PDBsum" id="6WDE"/>
<dbReference type="PDBsum" id="6WDF"/>
<dbReference type="PDBsum" id="6WDG"/>
<dbReference type="PDBsum" id="6WDH"/>
<dbReference type="PDBsum" id="6WDI"/>
<dbReference type="PDBsum" id="6WDJ"/>
<dbReference type="PDBsum" id="6WDK"/>
<dbReference type="PDBsum" id="6WDL"/>
<dbReference type="PDBsum" id="6WDM"/>
<dbReference type="PDBsum" id="6WNV"/>
<dbReference type="PDBsum" id="6WNW"/>
<dbReference type="PDBsum" id="6X6T"/>
<dbReference type="PDBsum" id="6X7F"/>
<dbReference type="PDBsum" id="6X7K"/>
<dbReference type="PDBsum" id="6X9Q"/>
<dbReference type="PDBsum" id="6XDQ"/>
<dbReference type="PDBsum" id="6XDR"/>
<dbReference type="PDBsum" id="6XE0"/>
<dbReference type="PDBsum" id="6XGF"/>
<dbReference type="PDBsum" id="6XII"/>
<dbReference type="PDBsum" id="6XIJ"/>
<dbReference type="PDBsum" id="6XZA"/>
<dbReference type="PDBsum" id="6XZB"/>
<dbReference type="PDBsum" id="6Y69"/>
<dbReference type="PDBsum" id="6ZTJ"/>
<dbReference type="PDBsum" id="6ZTL"/>
<dbReference type="PDBsum" id="6ZTM"/>
<dbReference type="PDBsum" id="6ZTN"/>
<dbReference type="PDBsum" id="6ZTO"/>
<dbReference type="PDBsum" id="6ZTP"/>
<dbReference type="PDBsum" id="6ZU1"/>
<dbReference type="PDBsum" id="7ABZ"/>
<dbReference type="PDBsum" id="7AC7"/>
<dbReference type="PDBsum" id="7ACJ"/>
<dbReference type="PDBsum" id="7ACR"/>
<dbReference type="PDBsum" id="7AF3"/>
<dbReference type="PDBsum" id="7AF5"/>
<dbReference type="PDBsum" id="7AF8"/>
<dbReference type="PDBsum" id="7AFA"/>
<dbReference type="PDBsum" id="7AFD"/>
<dbReference type="PDBsum" id="7AFH"/>
<dbReference type="PDBsum" id="7AFK"/>
<dbReference type="PDBsum" id="7AFN"/>
<dbReference type="PDBsum" id="7BOE"/>
<dbReference type="PDBsum" id="7BOH"/>
<dbReference type="PDBsum" id="7D6Z"/>
<dbReference type="PDBsum" id="7D80"/>
<dbReference type="PDBsum" id="7JSS"/>
<dbReference type="PDBsum" id="7JSW"/>
<dbReference type="PDBsum" id="7JSZ"/>
<dbReference type="PDBsum" id="7JT1"/>
<dbReference type="PDBsum" id="7JT2"/>
<dbReference type="PDBsum" id="7JT3"/>
<dbReference type="PDBsum" id="7K00"/>
<dbReference type="PDBsum" id="7K50"/>
<dbReference type="PDBsum" id="7K51"/>
<dbReference type="PDBsum" id="7K52"/>
<dbReference type="PDBsum" id="7K53"/>
<dbReference type="PDBsum" id="7K54"/>
<dbReference type="PDBsum" id="7K55"/>
<dbReference type="PDBsum" id="7LV0"/>
<dbReference type="PDBsum" id="7M5D"/>
<dbReference type="PDBsum" id="7N1P"/>
<dbReference type="PDBsum" id="7N2C"/>
<dbReference type="PDBsum" id="7N2U"/>
<dbReference type="PDBsum" id="7N2V"/>
<dbReference type="PDBsum" id="7N30"/>
<dbReference type="PDBsum" id="7N31"/>
<dbReference type="PDBsum" id="7NAR"/>
<dbReference type="PDBsum" id="7NAT"/>
<dbReference type="PDBsum" id="7NAU"/>
<dbReference type="PDBsum" id="7NAV"/>
<dbReference type="PDBsum" id="7NAX"/>
<dbReference type="PDBsum" id="7NBU"/>
<dbReference type="PDBsum" id="7O19"/>
<dbReference type="PDBsum" id="7O1A"/>
<dbReference type="PDBsum" id="7O1C"/>
<dbReference type="PDBsum" id="7O5H"/>
<dbReference type="PDBsum" id="7OE0"/>
<dbReference type="PDBsum" id="7OE1"/>
<dbReference type="PDBsum" id="7OIZ"/>
<dbReference type="PDBsum" id="7OJ0"/>
<dbReference type="PDBsum" id="7OXG"/>
<dbReference type="PDBsum" id="7OXH"/>
<dbReference type="PDBsum" id="7OXI"/>
<dbReference type="PDBsum" id="7OXJ"/>
<dbReference type="PDBsum" id="7OXK"/>
<dbReference type="PDBsum" id="7P3K"/>
<dbReference type="PDBsum" id="7PJU"/>
<dbReference type="PDBsum" id="7PJV"/>
<dbReference type="PDBsum" id="7PJY"/>
<dbReference type="PDBsum" id="7QG8"/>
<dbReference type="PDBsum" id="7QGN"/>
<dbReference type="PDBsum" id="7QGR"/>
<dbReference type="PDBsum" id="7S1G"/>
<dbReference type="PDBsum" id="7S1H"/>
<dbReference type="PDBsum" id="7S1I"/>
<dbReference type="PDBsum" id="7S1J"/>
<dbReference type="PDBsum" id="7S1K"/>
<dbReference type="PDBsum" id="7SA4"/>
<dbReference type="PDBsum" id="7SS9"/>
<dbReference type="PDBsum" id="7SSD"/>
<dbReference type="PDBsum" id="7SSL"/>
<dbReference type="PDBsum" id="7SSN"/>
<dbReference type="PDBsum" id="7SSO"/>
<dbReference type="PDBsum" id="7SSW"/>
<dbReference type="PDBsum" id="7ST2"/>
<dbReference type="PDBsum" id="7ST6"/>
<dbReference type="PDBsum" id="7ST7"/>
<dbReference type="PDBsum" id="7TOS"/>
<dbReference type="PDBsum" id="7UG7"/>
<dbReference type="PDBsum" id="7UPH"/>
<dbReference type="PDBsum" id="7Y7C"/>
<dbReference type="PDBsum" id="7Y7D"/>
<dbReference type="PDBsum" id="7Y7E"/>
<dbReference type="PDBsum" id="7Y7F"/>
<dbReference type="PDBsum" id="7Y7G"/>
<dbReference type="PDBsum" id="7Y7H"/>
<dbReference type="PDBsum" id="7ZTA"/>
<dbReference type="PDBsum" id="8A3L"/>
<dbReference type="PDBsum" id="8AKN"/>
<dbReference type="PDBsum" id="8AM9"/>
<dbReference type="PDBsum" id="8AYE"/>
<dbReference type="PDBsum" id="8B0X"/>
<dbReference type="PDBsum" id="8B7Y"/>
<dbReference type="PDBsum" id="8BF7"/>
<dbReference type="PDBsum" id="8BGE"/>
<dbReference type="PDBsum" id="8BGH"/>
<dbReference type="PDBsum" id="8BH4"/>
<dbReference type="PDBsum" id="8BHJ"/>
<dbReference type="PDBsum" id="8BHL"/>
<dbReference type="PDBsum" id="8BHN"/>
<dbReference type="PDBsum" id="8BHP"/>
<dbReference type="PDBsum" id="8BIL"/>
<dbReference type="PDBsum" id="8BIM"/>
<dbReference type="PDBsum" id="8CAI"/>
<dbReference type="PDBsum" id="8CAZ"/>
<dbReference type="PDBsum" id="8CF1"/>
<dbReference type="PDBsum" id="8CF8"/>
<dbReference type="PDBsum" id="8CGJ"/>
<dbReference type="PDBsum" id="8EIU"/>
<dbReference type="PDBsum" id="8EKC"/>
<dbReference type="PDBsum" id="8EMM"/>
<dbReference type="PDBsum" id="8EYT"/>
<dbReference type="PDBsum" id="8FIZ"/>
<dbReference type="PDBsum" id="8FTO"/>
<dbReference type="PDBsum" id="8FZD"/>
<dbReference type="PDBsum" id="8FZE"/>
<dbReference type="PDBsum" id="8FZF"/>
<dbReference type="PDBsum" id="8FZG"/>
<dbReference type="PDBsum" id="8FZH"/>
<dbReference type="PDBsum" id="8FZI"/>
<dbReference type="PDBsum" id="8FZJ"/>
<dbReference type="PDBsum" id="8G2U"/>
<dbReference type="PDBsum" id="8G31"/>
<dbReference type="PDBsum" id="8G34"/>
<dbReference type="PDBsum" id="8G38"/>
<dbReference type="PDBsum" id="8G6W"/>
<dbReference type="PDBsum" id="8G7P"/>
<dbReference type="PDBsum" id="8G7Q"/>
<dbReference type="PDBsum" id="8G7R"/>
<dbReference type="PDBsum" id="8G7S"/>
<dbReference type="PDBsum" id="8HSP"/>
<dbReference type="PDBsum" id="8HTZ"/>
<dbReference type="PDBsum" id="8HU1"/>
<dbReference type="PDBsum" id="8IFB"/>
<dbReference type="PDBsum" id="8IFC"/>
<dbReference type="PDBsum" id="8JSG"/>
<dbReference type="PDBsum" id="8K3O"/>
<dbReference type="PDBsum" id="8K4E"/>
<dbReference type="PDBsum" id="8P16"/>
<dbReference type="PDBsum" id="8P17"/>
<dbReference type="PDBsum" id="8P18"/>
<dbReference type="PDBsum" id="8PEG"/>
<dbReference type="PDBsum" id="8PHJ"/>
<dbReference type="PDBsum" id="8PKL"/>
<dbReference type="PDBsum" id="8PVA"/>
<dbReference type="PDBsum" id="8Q4F"/>
<dbReference type="PDBsum" id="8QBT"/>
<dbReference type="PDBsum" id="8QK7"/>
<dbReference type="PDBsum" id="8QOA"/>
<dbReference type="PDBsum" id="8R3V"/>
<dbReference type="PDBsum" id="8R6C"/>
<dbReference type="PDBsum" id="8R8M"/>
<dbReference type="PDBsum" id="8RCL"/>
<dbReference type="PDBsum" id="8RCM"/>
<dbReference type="PDBsum" id="8RCS"/>
<dbReference type="PDBsum" id="8RCT"/>
<dbReference type="PDBsum" id="8SYL"/>
<dbReference type="PDBsum" id="8T5D"/>
<dbReference type="PDBsum" id="8UPO"/>
<dbReference type="PDBsum" id="8UPR"/>
<dbReference type="PDBsum" id="8UQL"/>
<dbReference type="PDBsum" id="8UQM"/>
<dbReference type="PDBsum" id="8UQP"/>
<dbReference type="PDBsum" id="8UR0"/>
<dbReference type="PDBsum" id="8URH"/>
<dbReference type="PDBsum" id="8URI"/>
<dbReference type="PDBsum" id="8URX"/>
<dbReference type="PDBsum" id="8URY"/>
<dbReference type="PDBsum" id="8VS9"/>
<dbReference type="PDBsum" id="8VSA"/>
<dbReference type="PDBsum" id="8YUO"/>
<dbReference type="PDBsum" id="8YUP"/>
<dbReference type="PDBsum" id="8YUQ"/>
<dbReference type="PDBsum" id="8YUR"/>
<dbReference type="PDBsum" id="8YUS"/>
<dbReference type="PDBsum" id="9DUK"/>
<dbReference type="PDBsum" id="9DUL"/>
<dbReference type="PDBsum" id="9FBV"/>
<dbReference type="PDBsum" id="9GFT"/>
<dbReference type="PDBsum" id="9GGR"/>
<dbReference type="PDBsum" id="9GUP"/>
<dbReference type="PDBsum" id="9GUQ"/>
<dbReference type="PDBsum" id="9GUS"/>
<dbReference type="PDBsum" id="9GUT"/>
<dbReference type="PDBsum" id="9GUU"/>
<dbReference type="PDBsum" id="9GUV"/>
<dbReference type="PDBsum" id="9GUW"/>
<dbReference type="PDBsum" id="9GUX"/>
<dbReference type="PDBsum" id="9MOR"/>
<dbReference type="PDBsum" id="9MQ4"/>
<dbReference type="EMDB" id="EMD-0076"/>
<dbReference type="EMDB" id="EMD-0080"/>
<dbReference type="EMDB" id="EMD-0081"/>
<dbReference type="EMDB" id="EMD-0082"/>
<dbReference type="EMDB" id="EMD-0083"/>
<dbReference type="EMDB" id="EMD-0137"/>
<dbReference type="EMDB" id="EMD-0139"/>
<dbReference type="EMDB" id="EMD-0261"/>
<dbReference type="EMDB" id="EMD-10353"/>
<dbReference type="EMDB" id="EMD-10453"/>
<dbReference type="EMDB" id="EMD-10458"/>
<dbReference type="EMDB" id="EMD-10656"/>
<dbReference type="EMDB" id="EMD-10657"/>
<dbReference type="EMDB" id="EMD-10705"/>
<dbReference type="EMDB" id="EMD-11419"/>
<dbReference type="EMDB" id="EMD-11710"/>
<dbReference type="EMDB" id="EMD-11713"/>
<dbReference type="EMDB" id="EMD-11717"/>
<dbReference type="EMDB" id="EMD-11718"/>
<dbReference type="EMDB" id="EMD-12240"/>
<dbReference type="EMDB" id="EMD-12243"/>
<dbReference type="EMDB" id="EMD-12245"/>
<dbReference type="EMDB" id="EMD-12247"/>
<dbReference type="EMDB" id="EMD-12248"/>
<dbReference type="EMDB" id="EMD-12249"/>
<dbReference type="EMDB" id="EMD-12261"/>
<dbReference type="EMDB" id="EMD-12693"/>
<dbReference type="EMDB" id="EMD-12694"/>
<dbReference type="EMDB" id="EMD-12695"/>
<dbReference type="EMDB" id="EMD-12936"/>
<dbReference type="EMDB" id="EMD-12937"/>
<dbReference type="EMDB" id="EMD-13180"/>
<dbReference type="EMDB" id="EMD-13461"/>
<dbReference type="EMDB" id="EMD-13464"/>
<dbReference type="EMDB" id="EMD-13952"/>
<dbReference type="EMDB" id="EMD-13958"/>
<dbReference type="EMDB" id="EMD-14956"/>
<dbReference type="EMDB" id="EMD-15116"/>
<dbReference type="EMDB" id="EMD-15488"/>
<dbReference type="EMDB" id="EMD-15523"/>
<dbReference type="EMDB" id="EMD-15712"/>
<dbReference type="EMDB" id="EMD-15793"/>
<dbReference type="EMDB" id="EMD-15905"/>
<dbReference type="EMDB" id="EMD-16015"/>
<dbReference type="EMDB" id="EMD-16029"/>
<dbReference type="EMDB" id="EMD-16031"/>
<dbReference type="EMDB" id="EMD-16047"/>
<dbReference type="EMDB" id="EMD-16057"/>
<dbReference type="EMDB" id="EMD-16059"/>
<dbReference type="EMDB" id="EMD-16062"/>
<dbReference type="EMDB" id="EMD-16065"/>
<dbReference type="EMDB" id="EMD-16081"/>
<dbReference type="EMDB" id="EMD-16082"/>
<dbReference type="EMDB" id="EMD-16526"/>
<dbReference type="EMDB" id="EMD-16536"/>
<dbReference type="EMDB" id="EMD-16615"/>
<dbReference type="EMDB" id="EMD-16620"/>
<dbReference type="EMDB" id="EMD-16645"/>
<dbReference type="EMDB" id="EMD-17346"/>
<dbReference type="EMDB" id="EMD-17347"/>
<dbReference type="EMDB" id="EMD-17348"/>
<dbReference type="EMDB" id="EMD-17631"/>
<dbReference type="EMDB" id="EMD-17667"/>
<dbReference type="EMDB" id="EMD-17743"/>
<dbReference type="EMDB" id="EMD-17959"/>
<dbReference type="EMDB" id="EMD-18145"/>
<dbReference type="EMDB" id="EMD-18320"/>
<dbReference type="EMDB" id="EMD-18458"/>
<dbReference type="EMDB" id="EMD-18534"/>
<dbReference type="EMDB" id="EMD-18875"/>
<dbReference type="EMDB" id="EMD-18950"/>
<dbReference type="EMDB" id="EMD-19004"/>
<dbReference type="EMDB" id="EMD-19054"/>
<dbReference type="EMDB" id="EMD-19055"/>
<dbReference type="EMDB" id="EMD-19058"/>
<dbReference type="EMDB" id="EMD-19059"/>
<dbReference type="EMDB" id="EMD-20048"/>
<dbReference type="EMDB" id="EMD-20052"/>
<dbReference type="EMDB" id="EMD-21420"/>
<dbReference type="EMDB" id="EMD-21421"/>
<dbReference type="EMDB" id="EMD-21422"/>
<dbReference type="EMDB" id="EMD-21571"/>
<dbReference type="EMDB" id="EMD-21625"/>
<dbReference type="EMDB" id="EMD-21630"/>
<dbReference type="EMDB" id="EMD-21631"/>
<dbReference type="EMDB" id="EMD-21632"/>
<dbReference type="EMDB" id="EMD-21633"/>
<dbReference type="EMDB" id="EMD-21634"/>
<dbReference type="EMDB" id="EMD-21635"/>
<dbReference type="EMDB" id="EMD-21636"/>
<dbReference type="EMDB" id="EMD-21637"/>
<dbReference type="EMDB" id="EMD-21638"/>
<dbReference type="EMDB" id="EMD-21639"/>
<dbReference type="EMDB" id="EMD-21640"/>
<dbReference type="EMDB" id="EMD-21641"/>
<dbReference type="EMDB" id="EMD-21857"/>
<dbReference type="EMDB" id="EMD-21858"/>
<dbReference type="EMDB" id="EMD-22143"/>
<dbReference type="EMDB" id="EMD-22459"/>
<dbReference type="EMDB" id="EMD-22461"/>
<dbReference type="EMDB" id="EMD-22464"/>
<dbReference type="EMDB" id="EMD-22466"/>
<dbReference type="EMDB" id="EMD-22469"/>
<dbReference type="EMDB" id="EMD-22472"/>
<dbReference type="EMDB" id="EMD-22669"/>
<dbReference type="EMDB" id="EMD-22670"/>
<dbReference type="EMDB" id="EMD-22671"/>
<dbReference type="EMDB" id="EMD-22672"/>
<dbReference type="EMDB" id="EMD-22673"/>
<dbReference type="EMDB" id="EMD-22674"/>
<dbReference type="EMDB" id="EMD-23528"/>
<dbReference type="EMDB" id="EMD-24120"/>
<dbReference type="EMDB" id="EMD-24132"/>
<dbReference type="EMDB" id="EMD-24133"/>
<dbReference type="EMDB" id="EMD-24134"/>
<dbReference type="EMDB" id="EMD-24135"/>
<dbReference type="EMDB" id="EMD-24136"/>
<dbReference type="EMDB" id="EMD-24803"/>
<dbReference type="EMDB" id="EMD-25405"/>
<dbReference type="EMDB" id="EMD-25407"/>
<dbReference type="EMDB" id="EMD-25409"/>
<dbReference type="EMDB" id="EMD-25410"/>
<dbReference type="EMDB" id="EMD-25411"/>
<dbReference type="EMDB" id="EMD-25415"/>
<dbReference type="EMDB" id="EMD-25418"/>
<dbReference type="EMDB" id="EMD-25420"/>
<dbReference type="EMDB" id="EMD-25421"/>
<dbReference type="EMDB" id="EMD-26666"/>
<dbReference type="EMDB" id="EMD-30598"/>
<dbReference type="EMDB" id="EMD-30611"/>
<dbReference type="EMDB" id="EMD-33660"/>
<dbReference type="EMDB" id="EMD-33661"/>
<dbReference type="EMDB" id="EMD-33662"/>
<dbReference type="EMDB" id="EMD-33663"/>
<dbReference type="EMDB" id="EMD-33664"/>
<dbReference type="EMDB" id="EMD-33665"/>
<dbReference type="EMDB" id="EMD-3489"/>
<dbReference type="EMDB" id="EMD-3490"/>
<dbReference type="EMDB" id="EMD-3492"/>
<dbReference type="EMDB" id="EMD-3493"/>
<dbReference type="EMDB" id="EMD-3494"/>
<dbReference type="EMDB" id="EMD-3495"/>
<dbReference type="EMDB" id="EMD-35001"/>
<dbReference type="EMDB" id="EMD-35020"/>
<dbReference type="EMDB" id="EMD-35022"/>
<dbReference type="EMDB" id="EMD-3508"/>
<dbReference type="EMDB" id="EMD-35411"/>
<dbReference type="EMDB" id="EMD-35412"/>
<dbReference type="EMDB" id="EMD-3580"/>
<dbReference type="EMDB" id="EMD-36619"/>
<dbReference type="EMDB" id="EMD-3662"/>
<dbReference type="EMDB" id="EMD-36854"/>
<dbReference type="EMDB" id="EMD-36883"/>
<dbReference type="EMDB" id="EMD-3713"/>
<dbReference type="EMDB" id="EMD-3730"/>
<dbReference type="EMDB" id="EMD-3898"/>
<dbReference type="EMDB" id="EMD-3899"/>
<dbReference type="EMDB" id="EMD-3903"/>
<dbReference type="EMDB" id="EMD-39577"/>
<dbReference type="EMDB" id="EMD-39578"/>
<dbReference type="EMDB" id="EMD-39579"/>
<dbReference type="EMDB" id="EMD-39580"/>
<dbReference type="EMDB" id="EMD-39581"/>
<dbReference type="EMDB" id="EMD-4001"/>
<dbReference type="EMDB" id="EMD-4121"/>
<dbReference type="EMDB" id="EMD-4122"/>
<dbReference type="EMDB" id="EMD-4123"/>
<dbReference type="EMDB" id="EMD-4124"/>
<dbReference type="EMDB" id="EMD-4125"/>
<dbReference type="EMDB" id="EMD-4126"/>
<dbReference type="EMDB" id="EMD-4476"/>
<dbReference type="EMDB" id="EMD-4477"/>
<dbReference type="EMDB" id="EMD-4478"/>
<dbReference type="EMDB" id="EMD-50296"/>
<dbReference type="EMDB" id="EMD-51318"/>
<dbReference type="EMDB" id="EMD-51340"/>
<dbReference type="EMDB" id="EMD-51615"/>
<dbReference type="EMDB" id="EMD-51616"/>
<dbReference type="EMDB" id="EMD-51618"/>
<dbReference type="EMDB" id="EMD-51619"/>
<dbReference type="EMDB" id="EMD-51620"/>
<dbReference type="EMDB" id="EMD-51621"/>
<dbReference type="EMDB" id="EMD-51622"/>
<dbReference type="EMDB" id="EMD-51623"/>
<dbReference type="EMDB" id="EMD-6667"/>
<dbReference type="EMDB" id="EMD-7289"/>
<dbReference type="EMDB" id="EMD-7341"/>
<dbReference type="EMDB" id="EMD-8107"/>
<dbReference type="EMDB" id="EMD-8176"/>
<dbReference type="EMDB" id="EMD-8237"/>
<dbReference type="EMDB" id="EMD-8238"/>
<dbReference type="EMDB" id="EMD-8279"/>
<dbReference type="EMDB" id="EMD-8280"/>
<dbReference type="EMDB" id="EMD-8281"/>
<dbReference type="EMDB" id="EMD-8282"/>
<dbReference type="EMDB" id="EMD-8505"/>
<dbReference type="EMDB" id="EMD-8615"/>
<dbReference type="EMDB" id="EMD-8616"/>
<dbReference type="EMDB" id="EMD-8617"/>
<dbReference type="EMDB" id="EMD-8618"/>
<dbReference type="EMDB" id="EMD-8619"/>
<dbReference type="EMDB" id="EMD-8620"/>
<dbReference type="EMDB" id="EMD-8813"/>
<dbReference type="EMDB" id="EMD-8814"/>
<dbReference type="EMDB" id="EMD-8815"/>
<dbReference type="EMDB" id="EMD-8828"/>
<dbReference type="SMR" id="P0A7V0"/>
<dbReference type="BioGRID" id="4260812">
    <property type="interactions" value="119"/>
</dbReference>
<dbReference type="BioGRID" id="852185">
    <property type="interactions" value="5"/>
</dbReference>
<dbReference type="ComplexPortal" id="CPX-3802">
    <property type="entry name" value="30S small ribosomal subunit"/>
</dbReference>
<dbReference type="DIP" id="DIP-6877N"/>
<dbReference type="FunCoup" id="P0A7V0">
    <property type="interactions" value="1409"/>
</dbReference>
<dbReference type="IntAct" id="P0A7V0">
    <property type="interactions" value="218"/>
</dbReference>
<dbReference type="STRING" id="511145.b0169"/>
<dbReference type="jPOST" id="P0A7V0"/>
<dbReference type="PaxDb" id="511145-b0169"/>
<dbReference type="EnsemblBacteria" id="AAC73280">
    <property type="protein sequence ID" value="AAC73280"/>
    <property type="gene ID" value="b0169"/>
</dbReference>
<dbReference type="GeneID" id="89519558"/>
<dbReference type="GeneID" id="947874"/>
<dbReference type="KEGG" id="ecj:JW0164"/>
<dbReference type="KEGG" id="eco:b0169"/>
<dbReference type="KEGG" id="ecoc:C3026_00770"/>
<dbReference type="PATRIC" id="fig|1411691.4.peg.2112"/>
<dbReference type="EchoBASE" id="EB0894"/>
<dbReference type="eggNOG" id="COG0052">
    <property type="taxonomic scope" value="Bacteria"/>
</dbReference>
<dbReference type="HOGENOM" id="CLU_040318_1_2_6"/>
<dbReference type="InParanoid" id="P0A7V0"/>
<dbReference type="OMA" id="PYIFMEK"/>
<dbReference type="OrthoDB" id="9808036at2"/>
<dbReference type="PhylomeDB" id="P0A7V0"/>
<dbReference type="BioCyc" id="EcoCyc:EG10901-MONOMER"/>
<dbReference type="BioCyc" id="MetaCyc:EG10901-MONOMER"/>
<dbReference type="EvolutionaryTrace" id="P0A7V0"/>
<dbReference type="PRO" id="PR:P0A7V0"/>
<dbReference type="Proteomes" id="UP000000625">
    <property type="component" value="Chromosome"/>
</dbReference>
<dbReference type="GO" id="GO:0005737">
    <property type="term" value="C:cytoplasm"/>
    <property type="evidence" value="ECO:0000314"/>
    <property type="project" value="ComplexPortal"/>
</dbReference>
<dbReference type="GO" id="GO:0022627">
    <property type="term" value="C:cytosolic small ribosomal subunit"/>
    <property type="evidence" value="ECO:0000314"/>
    <property type="project" value="CAFA"/>
</dbReference>
<dbReference type="GO" id="GO:0003735">
    <property type="term" value="F:structural constituent of ribosome"/>
    <property type="evidence" value="ECO:0000314"/>
    <property type="project" value="CAFA"/>
</dbReference>
<dbReference type="GO" id="GO:0008270">
    <property type="term" value="F:zinc ion binding"/>
    <property type="evidence" value="ECO:0000314"/>
    <property type="project" value="EcoliWiki"/>
</dbReference>
<dbReference type="GO" id="GO:0002181">
    <property type="term" value="P:cytoplasmic translation"/>
    <property type="evidence" value="ECO:0000303"/>
    <property type="project" value="ComplexPortal"/>
</dbReference>
<dbReference type="GO" id="GO:0000028">
    <property type="term" value="P:ribosomal small subunit assembly"/>
    <property type="evidence" value="ECO:0000314"/>
    <property type="project" value="CAFA"/>
</dbReference>
<dbReference type="CDD" id="cd01425">
    <property type="entry name" value="RPS2"/>
    <property type="match status" value="1"/>
</dbReference>
<dbReference type="FunFam" id="1.10.287.610:FF:000001">
    <property type="entry name" value="30S ribosomal protein S2"/>
    <property type="match status" value="1"/>
</dbReference>
<dbReference type="Gene3D" id="3.40.50.10490">
    <property type="entry name" value="Glucose-6-phosphate isomerase like protein, domain 1"/>
    <property type="match status" value="1"/>
</dbReference>
<dbReference type="Gene3D" id="1.10.287.610">
    <property type="entry name" value="Helix hairpin bin"/>
    <property type="match status" value="1"/>
</dbReference>
<dbReference type="HAMAP" id="MF_00291_B">
    <property type="entry name" value="Ribosomal_uS2_B"/>
    <property type="match status" value="1"/>
</dbReference>
<dbReference type="InterPro" id="IPR001865">
    <property type="entry name" value="Ribosomal_uS2"/>
</dbReference>
<dbReference type="InterPro" id="IPR005706">
    <property type="entry name" value="Ribosomal_uS2_bac/mit/plastid"/>
</dbReference>
<dbReference type="InterPro" id="IPR018130">
    <property type="entry name" value="Ribosomal_uS2_CS"/>
</dbReference>
<dbReference type="InterPro" id="IPR023591">
    <property type="entry name" value="Ribosomal_uS2_flav_dom_sf"/>
</dbReference>
<dbReference type="NCBIfam" id="TIGR01011">
    <property type="entry name" value="rpsB_bact"/>
    <property type="match status" value="1"/>
</dbReference>
<dbReference type="PANTHER" id="PTHR12534">
    <property type="entry name" value="30S RIBOSOMAL PROTEIN S2 PROKARYOTIC AND ORGANELLAR"/>
    <property type="match status" value="1"/>
</dbReference>
<dbReference type="PANTHER" id="PTHR12534:SF0">
    <property type="entry name" value="SMALL RIBOSOMAL SUBUNIT PROTEIN US2M"/>
    <property type="match status" value="1"/>
</dbReference>
<dbReference type="Pfam" id="PF00318">
    <property type="entry name" value="Ribosomal_S2"/>
    <property type="match status" value="1"/>
</dbReference>
<dbReference type="PRINTS" id="PR00395">
    <property type="entry name" value="RIBOSOMALS2"/>
</dbReference>
<dbReference type="SUPFAM" id="SSF52313">
    <property type="entry name" value="Ribosomal protein S2"/>
    <property type="match status" value="1"/>
</dbReference>
<dbReference type="PROSITE" id="PS00962">
    <property type="entry name" value="RIBOSOMAL_S2_1"/>
    <property type="match status" value="1"/>
</dbReference>
<dbReference type="PROSITE" id="PS00963">
    <property type="entry name" value="RIBOSOMAL_S2_2"/>
    <property type="match status" value="1"/>
</dbReference>
<sequence>MATVSMRDMLKAGVHFGHQTRYWNPKMKPFIFGARNKVHIINLEKTVPMFNEALAELNKIASRKGKILFVGTKRAASEAVKDAALSCDQFFVNHRWLGGMLTNWKTVRQSIKRLKDLETQSQDGTFDKLTKKEALMRTRELEKLENSLGGIKDMGGLPDALFVIDADHEHIAIKEANNLGIPVFAIVDTNSDPDGVDFVIPGNDDAIRAVTLYLGAVAATVREGRSQDLASQAEESFVEAE</sequence>
<reference key="1">
    <citation type="journal article" date="1981" name="Nucleic Acids Res.">
        <title>Organization and nucleotide sequence of a new ribosomal operon in Escherichia coli containing the genes for ribosomal protein S2 and elongation factor Ts.</title>
        <authorList>
            <person name="An G."/>
            <person name="Bendiak D.S."/>
            <person name="Mamelak L.A."/>
            <person name="Friesen J.D."/>
        </authorList>
    </citation>
    <scope>NUCLEOTIDE SEQUENCE [GENOMIC DNA]</scope>
</reference>
<reference key="2">
    <citation type="journal article" date="1994" name="Nucleic Acids Res.">
        <title>Systematic sequencing of the Escherichia coli genome: analysis of the 2.4-4.1 min (110,917-193,643 bp) region.</title>
        <authorList>
            <person name="Fujita N."/>
            <person name="Mori H."/>
            <person name="Yura T."/>
            <person name="Ishihama A."/>
        </authorList>
    </citation>
    <scope>NUCLEOTIDE SEQUENCE [LARGE SCALE GENOMIC DNA]</scope>
    <source>
        <strain>K12 / W3110 / ATCC 27325 / DSM 5911</strain>
    </source>
</reference>
<reference key="3">
    <citation type="submission" date="1997-01" db="EMBL/GenBank/DDBJ databases">
        <title>Sequence of minutes 4-25 of Escherichia coli.</title>
        <authorList>
            <person name="Chung E."/>
            <person name="Allen E."/>
            <person name="Araujo R."/>
            <person name="Aparicio A.M."/>
            <person name="Davis K."/>
            <person name="Duncan M."/>
            <person name="Federspiel N."/>
            <person name="Hyman R."/>
            <person name="Kalman S."/>
            <person name="Komp C."/>
            <person name="Kurdi O."/>
            <person name="Lew H."/>
            <person name="Lin D."/>
            <person name="Namath A."/>
            <person name="Oefner P."/>
            <person name="Roberts D."/>
            <person name="Schramm S."/>
            <person name="Davis R.W."/>
        </authorList>
    </citation>
    <scope>NUCLEOTIDE SEQUENCE [LARGE SCALE GENOMIC DNA]</scope>
    <source>
        <strain>K12 / MG1655 / ATCC 47076</strain>
    </source>
</reference>
<reference key="4">
    <citation type="journal article" date="1997" name="Science">
        <title>The complete genome sequence of Escherichia coli K-12.</title>
        <authorList>
            <person name="Blattner F.R."/>
            <person name="Plunkett G. III"/>
            <person name="Bloch C.A."/>
            <person name="Perna N.T."/>
            <person name="Burland V."/>
            <person name="Riley M."/>
            <person name="Collado-Vides J."/>
            <person name="Glasner J.D."/>
            <person name="Rode C.K."/>
            <person name="Mayhew G.F."/>
            <person name="Gregor J."/>
            <person name="Davis N.W."/>
            <person name="Kirkpatrick H.A."/>
            <person name="Goeden M.A."/>
            <person name="Rose D.J."/>
            <person name="Mau B."/>
            <person name="Shao Y."/>
        </authorList>
    </citation>
    <scope>NUCLEOTIDE SEQUENCE [LARGE SCALE GENOMIC DNA]</scope>
    <source>
        <strain>K12 / MG1655 / ATCC 47076</strain>
    </source>
</reference>
<reference key="5">
    <citation type="journal article" date="2006" name="Mol. Syst. Biol.">
        <title>Highly accurate genome sequences of Escherichia coli K-12 strains MG1655 and W3110.</title>
        <authorList>
            <person name="Hayashi K."/>
            <person name="Morooka N."/>
            <person name="Yamamoto Y."/>
            <person name="Fujita K."/>
            <person name="Isono K."/>
            <person name="Choi S."/>
            <person name="Ohtsubo E."/>
            <person name="Baba T."/>
            <person name="Wanner B.L."/>
            <person name="Mori H."/>
            <person name="Horiuchi T."/>
        </authorList>
    </citation>
    <scope>NUCLEOTIDE SEQUENCE [LARGE SCALE GENOMIC DNA]</scope>
    <source>
        <strain>K12 / W3110 / ATCC 27325 / DSM 5911</strain>
    </source>
</reference>
<reference key="6">
    <citation type="journal article" date="1981" name="FEBS Lett.">
        <title>Primary structure of protein S2 from the Escherichia coli ribosome.</title>
        <authorList>
            <person name="Wittmann-Liebold B."/>
            <person name="Bosserhoff A."/>
        </authorList>
    </citation>
    <scope>PROTEIN SEQUENCE OF 2-241</scope>
    <scope>SUBUNIT</scope>
    <source>
        <strain>K12</strain>
    </source>
</reference>
<reference key="7">
    <citation type="journal article" date="1992" name="Biochem. Biophys. Res. Commun.">
        <title>Identification of Escherichia coli proteins cross-reacting with antibodies against region 2.2 peptide of RNA polymerase sigma subunit.</title>
        <authorList>
            <person name="Ueshima R."/>
            <person name="Fujita N."/>
            <person name="Ishihama A."/>
        </authorList>
    </citation>
    <scope>PROTEIN SEQUENCE OF 2-31</scope>
</reference>
<reference key="8">
    <citation type="journal article" date="1997" name="Electrophoresis">
        <title>Comparing the predicted and observed properties of proteins encoded in the genome of Escherichia coli K-12.</title>
        <authorList>
            <person name="Link A.J."/>
            <person name="Robison K."/>
            <person name="Church G.M."/>
        </authorList>
    </citation>
    <scope>PROTEIN SEQUENCE OF 2-13</scope>
    <source>
        <strain>K12 / EMG2</strain>
    </source>
</reference>
<reference key="9">
    <citation type="journal article" date="1995" name="EMBO J.">
        <title>Protein-rRNA binding features and their structural and functional implications in ribosomes as determined by cross-linking studies.</title>
        <authorList>
            <person name="Urlaub H."/>
            <person name="Kruft V."/>
            <person name="Bischof O."/>
            <person name="Mueller E.-C."/>
            <person name="Wittmann-Liebold B."/>
        </authorList>
    </citation>
    <scope>PROTEIN SEQUENCE OF 27-35</scope>
    <scope>CROSS-LINKING TO RRNA</scope>
    <scope>SUBUNIT</scope>
    <source>
        <strain>MRE-600</strain>
    </source>
</reference>
<reference key="10">
    <citation type="journal article" date="1997" name="Electrophoresis">
        <title>Escherichia coli proteome analysis using the gene-protein database.</title>
        <authorList>
            <person name="VanBogelen R.A."/>
            <person name="Abshire K.Z."/>
            <person name="Moldover B."/>
            <person name="Olson E.R."/>
            <person name="Neidhardt F.C."/>
        </authorList>
    </citation>
    <scope>IDENTIFICATION BY 2D-GEL</scope>
</reference>
<reference key="11">
    <citation type="journal article" date="1998" name="Eur. J. Biochem.">
        <title>Flexibility of the nascent polypeptide chain within the ribosome -- contacts from the peptide N-terminus to a specific region of the 30S subunit.</title>
        <authorList>
            <person name="Choi K.M."/>
            <person name="Atkins J.F."/>
            <person name="Gesteland R.F."/>
            <person name="Brimacombe R."/>
        </authorList>
    </citation>
    <scope>CROSS-LINKING TO NASCENT POLYPEPTIDE CHAINS</scope>
</reference>
<reference key="12">
    <citation type="journal article" date="1999" name="Anal. Biochem.">
        <title>Observation of Escherichia coli ribosomal proteins and their posttranslational modifications by mass spectrometry.</title>
        <authorList>
            <person name="Arnold R.J."/>
            <person name="Reilly J.P."/>
        </authorList>
    </citation>
    <scope>MASS SPECTROMETRY</scope>
    <scope>SUBUNIT</scope>
    <source>
        <strain>K12 / ATCC 25404 / DSM 5698 / NCIMB 11290</strain>
    </source>
</reference>
<reference key="13">
    <citation type="journal article" date="2002" name="Mol. Microbiol.">
        <title>Effects of ribosomal proteins S1, S2 and the DeaD/CsdA DEAD-box helicase on translation of leaderless and canonical mRNAs in Escherichia coli.</title>
        <authorList>
            <person name="Moll I."/>
            <person name="Grill S."/>
            <person name="Gruendling A."/>
            <person name="Blaesi U."/>
        </authorList>
    </citation>
    <scope>FUNCTION</scope>
    <scope>SUBUNIT</scope>
</reference>
<reference key="14">
    <citation type="journal article" date="2014" name="Curr. Opin. Struct. Biol.">
        <title>A new system for naming ribosomal proteins.</title>
        <authorList>
            <person name="Ban N."/>
            <person name="Beckmann R."/>
            <person name="Cate J.H.D."/>
            <person name="Dinman J.D."/>
            <person name="Dragon F."/>
            <person name="Ellis S.R."/>
            <person name="Lafontaine D.L.J."/>
            <person name="Lindahl L."/>
            <person name="Liljas A."/>
            <person name="Lipton J.M."/>
            <person name="McAlear M.A."/>
            <person name="Moore P.B."/>
            <person name="Noller H.F."/>
            <person name="Ortega J."/>
            <person name="Panse V.G."/>
            <person name="Ramakrishnan V."/>
            <person name="Spahn C.M.T."/>
            <person name="Steitz T.A."/>
            <person name="Tchorzewski M."/>
            <person name="Tollervey D."/>
            <person name="Warren A.J."/>
            <person name="Williamson J.R."/>
            <person name="Wilson D."/>
            <person name="Yonath A."/>
            <person name="Yusupov M."/>
        </authorList>
    </citation>
    <scope>NOMENCLATURE</scope>
</reference>
<reference key="15">
    <citation type="journal article" date="2002" name="Nat. Struct. Biol.">
        <title>All-atom homology model of the Escherichia coli 30S ribosomal subunit.</title>
        <authorList>
            <person name="Tung C.-S."/>
            <person name="Joseph S."/>
            <person name="Sanbonmatsu K.Y."/>
        </authorList>
    </citation>
    <scope>3D-STRUCTURE MODELING</scope>
    <scope>SUBUNIT</scope>
</reference>
<reference key="16">
    <citation type="journal article" date="2011" name="Nat. Chem. Biol.">
        <title>Identification of lysine succinylation as a new post-translational modification.</title>
        <authorList>
            <person name="Zhang Z."/>
            <person name="Tan M."/>
            <person name="Xie Z."/>
            <person name="Dai L."/>
            <person name="Chen Y."/>
            <person name="Zhao Y."/>
        </authorList>
    </citation>
    <scope>SUCCINYLATION AT LYS-115</scope>
    <source>
        <strain>K12</strain>
    </source>
</reference>
<reference key="17">
    <citation type="journal article" date="2003" name="Cell">
        <title>Study of the structural dynamics of the E. coli 70S ribosome using real-space refinement.</title>
        <authorList>
            <person name="Gao H."/>
            <person name="Sengupta J."/>
            <person name="Valle M."/>
            <person name="Korostelev A."/>
            <person name="Eswar N."/>
            <person name="Stagg S.M."/>
            <person name="Van Roey P."/>
            <person name="Agrawal R.K."/>
            <person name="Harvey S.C."/>
            <person name="Sali A."/>
            <person name="Chapman M.S."/>
            <person name="Frank J."/>
        </authorList>
    </citation>
    <scope>STRUCTURE BY ELECTRON MICROSCOPY (11.50 ANGSTROMS)</scope>
    <scope>SUBUNIT</scope>
    <source>
        <strain>MRE-600</strain>
    </source>
</reference>
<reference key="18">
    <citation type="journal article" date="2005" name="Science">
        <title>Structures of the bacterial ribosome at 3.5 A resolution.</title>
        <authorList>
            <person name="Schuwirth B.S."/>
            <person name="Borovinskaya M.A."/>
            <person name="Hau C.W."/>
            <person name="Zhang W."/>
            <person name="Vila-Sanjurjo A."/>
            <person name="Holton J.M."/>
            <person name="Cate J.H.D."/>
        </authorList>
    </citation>
    <scope>X-RAY CRYSTALLOGRAPHY (3.46 ANGSTROMS) OF 2 DIFFERENT RIBOSOME STRUCTURES</scope>
    <scope>SUBUNIT</scope>
    <source>
        <strain>MRE-600</strain>
    </source>
</reference>
<reference key="19">
    <citation type="journal article" date="2017" name="Nature">
        <title>Mechanistic insights into the alternative translation termination by ArfA and RF2.</title>
        <authorList>
            <person name="Ma C."/>
            <person name="Kurita D."/>
            <person name="Li N."/>
            <person name="Chen Y."/>
            <person name="Himeno H."/>
            <person name="Gao N."/>
        </authorList>
    </citation>
    <scope>STRUCTURE BY ELECTRON MICROSCOPY (3.0 ANGSTROMS) OF 70S RIBOSOME IN COMPLEX WITH ARFA AND RF2</scope>
    <scope>SUBUNIT</scope>
</reference>
<reference key="20">
    <citation type="journal article" date="2017" name="Nature">
        <title>Structural basis for ArfA-RF2-mediated translation termination on mRNAs lacking stop codons.</title>
        <authorList>
            <person name="Huter P."/>
            <person name="Mueller C."/>
            <person name="Beckert B."/>
            <person name="Arenz S."/>
            <person name="Berninghausen O."/>
            <person name="Beckmann R."/>
            <person name="Wilson D.N."/>
        </authorList>
    </citation>
    <scope>STRUCTURE BY ELECTRON MICROSCOPY (3.1 ANGSTROMS) OF 70S RIBOSOME IN COMPLEX WITH ARFA AND RF2</scope>
    <scope>SUBUNIT</scope>
</reference>
<reference evidence="19 20 21 22" key="21">
    <citation type="journal article" date="2016" name="Science">
        <title>Translational termination without a stop codon.</title>
        <authorList>
            <person name="James N.R."/>
            <person name="Brown A."/>
            <person name="Gordiyenko Y."/>
            <person name="Ramakrishnan V."/>
        </authorList>
    </citation>
    <scope>STRUCTURE BY ELECTRON MICROSCOPY (2.97 ANGSTROMS) OF 70S RIBOSOME IN COMPLEX WITH ARFA AND RF2</scope>
    <scope>SUBUNIT</scope>
</reference>
<reference key="22">
    <citation type="journal article" date="2017" name="Nature">
        <title>Structural basis of co-translational quality control by ArfA and RF2 bound to ribosome.</title>
        <authorList>
            <person name="Zeng F."/>
            <person name="Chen Y."/>
            <person name="Remis J."/>
            <person name="Shekhar M."/>
            <person name="Phillips J.C."/>
            <person name="Tajkhorshid E."/>
            <person name="Jin H."/>
        </authorList>
    </citation>
    <scope>STRUCTURE BY ELECTRON MICROSCOPY (3.52 ANGSTROMS) OF 70S RIBOSOME IN COMPLEX WITH ARFA AND RF2</scope>
    <scope>SUBUNIT</scope>
</reference>
<reference evidence="23 24" key="23">
    <citation type="journal article" date="2022" name="Nature">
        <title>Ribosome collisions induce mRNA cleavage and ribosome rescue in bacteria.</title>
        <authorList>
            <person name="Saito K."/>
            <person name="Kratzat H."/>
            <person name="Campbell A."/>
            <person name="Buschauer R."/>
            <person name="Burroughs A.M."/>
            <person name="Berninghausen O."/>
            <person name="Aravind L."/>
            <person name="Green R."/>
            <person name="Beckmann R."/>
            <person name="Buskirk A.R."/>
        </authorList>
    </citation>
    <scope>STRUCTURE BY ELECTRON MICROSCOPY (3.37 ANGSTROMS)</scope>
    <scope>INTERACTION WITH SMRB</scope>
    <source>
        <strain>K12 / MG1655 / ATCC 47076</strain>
    </source>
</reference>
<organism>
    <name type="scientific">Escherichia coli (strain K12)</name>
    <dbReference type="NCBI Taxonomy" id="83333"/>
    <lineage>
        <taxon>Bacteria</taxon>
        <taxon>Pseudomonadati</taxon>
        <taxon>Pseudomonadota</taxon>
        <taxon>Gammaproteobacteria</taxon>
        <taxon>Enterobacterales</taxon>
        <taxon>Enterobacteriaceae</taxon>
        <taxon>Escherichia</taxon>
    </lineage>
</organism>
<keyword id="KW-0002">3D-structure</keyword>
<keyword id="KW-0903">Direct protein sequencing</keyword>
<keyword id="KW-1185">Reference proteome</keyword>
<keyword id="KW-0687">Ribonucleoprotein</keyword>
<keyword id="KW-0689">Ribosomal protein</keyword>
<accession>P0A7V0</accession>
<accession>P02351</accession>
<accession>Q9R2E5</accession>